<organism>
    <name type="scientific">Homo sapiens</name>
    <name type="common">Human</name>
    <dbReference type="NCBI Taxonomy" id="9606"/>
    <lineage>
        <taxon>Eukaryota</taxon>
        <taxon>Metazoa</taxon>
        <taxon>Chordata</taxon>
        <taxon>Craniata</taxon>
        <taxon>Vertebrata</taxon>
        <taxon>Euteleostomi</taxon>
        <taxon>Mammalia</taxon>
        <taxon>Eutheria</taxon>
        <taxon>Euarchontoglires</taxon>
        <taxon>Primates</taxon>
        <taxon>Haplorrhini</taxon>
        <taxon>Catarrhini</taxon>
        <taxon>Hominidae</taxon>
        <taxon>Homo</taxon>
    </lineage>
</organism>
<proteinExistence type="evidence at protein level"/>
<sequence length="218" mass="24579">MATRSPGVVISDDEPGYDLDLFCIPNHYAEDLERVFIPHGLIMDRTERLARDVMKEMGGHHIVALCVLKGGYKFFADLLDYIKALNRNSDRSIPMTVDFIRLKSYCNDQSTGDIKVIGGDDLSTLTGKNVLIVEDIIDTGKTMQTLLSLVRQYNPKMVKVASLLVKRTPRSVGYKPDFVGFEIPDKFVVGYALDYNEYFRDLNHVCVISETGKAKYKA</sequence>
<protein>
    <recommendedName>
        <fullName>Hypoxanthine-guanine phosphoribosyltransferase</fullName>
        <shortName>HGPRT</shortName>
        <shortName>HGPRTase</shortName>
        <ecNumber evidence="3 13">2.4.2.8</ecNumber>
    </recommendedName>
</protein>
<name>HPRT_HUMAN</name>
<feature type="initiator methionine" description="Removed" evidence="34">
    <location>
        <position position="1"/>
    </location>
</feature>
<feature type="chain" id="PRO_0000139585" description="Hypoxanthine-guanine phosphoribosyltransferase">
    <location>
        <begin position="2"/>
        <end position="218"/>
    </location>
</feature>
<feature type="active site" description="Proton acceptor" evidence="40">
    <location>
        <position position="138"/>
    </location>
</feature>
<feature type="binding site" evidence="37">
    <location>
        <position position="69"/>
    </location>
    <ligand>
        <name>GMP</name>
        <dbReference type="ChEBI" id="CHEBI:58115"/>
    </ligand>
</feature>
<feature type="binding site" evidence="37">
    <location>
        <begin position="134"/>
        <end position="142"/>
    </location>
    <ligand>
        <name>GMP</name>
        <dbReference type="ChEBI" id="CHEBI:58115"/>
    </ligand>
</feature>
<feature type="binding site" evidence="37">
    <location>
        <position position="166"/>
    </location>
    <ligand>
        <name>GMP</name>
        <dbReference type="ChEBI" id="CHEBI:58115"/>
    </ligand>
</feature>
<feature type="binding site" evidence="37">
    <location>
        <begin position="186"/>
        <end position="188"/>
    </location>
    <ligand>
        <name>GMP</name>
        <dbReference type="ChEBI" id="CHEBI:58115"/>
    </ligand>
</feature>
<feature type="binding site" evidence="37">
    <location>
        <position position="194"/>
    </location>
    <ligand>
        <name>GMP</name>
        <dbReference type="ChEBI" id="CHEBI:58115"/>
    </ligand>
</feature>
<feature type="binding site">
    <location>
        <position position="194"/>
    </location>
    <ligand>
        <name>Mg(2+)</name>
        <dbReference type="ChEBI" id="CHEBI:18420"/>
    </ligand>
</feature>
<feature type="modified residue" description="N-acetylalanine" evidence="34">
    <location>
        <position position="2"/>
    </location>
</feature>
<feature type="modified residue" description="N6-acetyllysine" evidence="1">
    <location>
        <position position="103"/>
    </location>
</feature>
<feature type="modified residue" description="Phosphothreonine" evidence="2">
    <location>
        <position position="142"/>
    </location>
</feature>
<feature type="cross-link" description="Glycyl lysine isopeptide (Lys-Gly) (interchain with G-Cter in SUMO1); alternate" evidence="41">
    <location>
        <position position="115"/>
    </location>
</feature>
<feature type="cross-link" description="Glycyl lysine isopeptide (Lys-Gly) (interchain with G-Cter in SUMO2); alternate" evidence="42">
    <location>
        <position position="115"/>
    </location>
</feature>
<feature type="sequence variant" id="VAR_006750" description="In HRH; Gravesend." evidence="14">
    <original>G</original>
    <variation>D</variation>
    <location>
        <position position="7"/>
    </location>
</feature>
<feature type="sequence variant" id="VAR_006751" description="In LNS; HB; dbSNP:rs2124280542." evidence="5">
    <original>V</original>
    <variation>G</variation>
    <location>
        <position position="8"/>
    </location>
</feature>
<feature type="sequence variant" id="VAR_071609" description="In LNS; Asia." evidence="10">
    <location>
        <position position="8"/>
    </location>
</feature>
<feature type="sequence variant" id="VAR_006752" description="In LNS; FG." evidence="5">
    <original>G</original>
    <variation>D</variation>
    <location>
        <position position="16"/>
    </location>
</feature>
<feature type="sequence variant" id="VAR_006753" description="In HRH; Urangan; dbSNP:rs137852499." evidence="12">
    <original>G</original>
    <variation>S</variation>
    <location>
        <position position="16"/>
    </location>
</feature>
<feature type="sequence variant" id="VAR_006754" description="In HRH; Mashad; strongly reduces enzymatic activity." evidence="20">
    <original>D</original>
    <variation>V</variation>
    <location>
        <position position="20"/>
    </location>
</feature>
<feature type="sequence variant" id="VAR_071610" description="In HRH; Reduces enzymatic activity." evidence="20">
    <original>C</original>
    <variation>F</variation>
    <location>
        <position position="23"/>
    </location>
</feature>
<feature type="sequence variant" id="VAR_006755" description="In HRH; JS." evidence="5">
    <original>C</original>
    <variation>W</variation>
    <location>
        <position position="23"/>
    </location>
</feature>
<feature type="sequence variant" id="VAR_012312" description="In LNS; Asia." evidence="10 16">
    <location>
        <position position="28"/>
    </location>
</feature>
<feature type="sequence variant" id="VAR_006756" description="In LNS; Detroit; dbSNP:rs137852480." evidence="22">
    <original>L</original>
    <variation>P</variation>
    <location>
        <position position="41"/>
    </location>
</feature>
<feature type="sequence variant" id="VAR_006757" description="In LNS; Isar." evidence="35">
    <original>I</original>
    <variation>F</variation>
    <location>
        <position position="42"/>
    </location>
</feature>
<feature type="sequence variant" id="VAR_006758" description="In LNS; Heapey." evidence="14">
    <original>I</original>
    <variation>T</variation>
    <location>
        <position position="42"/>
    </location>
</feature>
<feature type="sequence variant" id="VAR_006759" description="In LNS; Salamanca.">
    <original>MD</original>
    <variation>RN</variation>
    <location>
        <begin position="43"/>
        <end position="44"/>
    </location>
</feature>
<feature type="sequence variant" id="VAR_071611" description="In LNS; Japan." evidence="15">
    <original>D</original>
    <variation>Y</variation>
    <location>
        <position position="44"/>
    </location>
</feature>
<feature type="sequence variant" id="VAR_006760" description="In LNS; RJK 2163; dbSNP:rs137852491." evidence="18">
    <original>R</original>
    <variation>K</variation>
    <location>
        <position position="45"/>
    </location>
</feature>
<feature type="sequence variant" id="VAR_006761" description="In HRH; AD and DD; dbSNP:rs387906725." evidence="5">
    <original>R</original>
    <variation>H</variation>
    <location>
        <position position="48"/>
    </location>
</feature>
<feature type="sequence variant" id="VAR_006763" description="In LNS; LW; dbSNP:rs1556026984." evidence="5">
    <original>A</original>
    <variation>P</variation>
    <location>
        <position position="50"/>
    </location>
</feature>
<feature type="sequence variant" id="VAR_006762" description="In LNS; 1265." evidence="16">
    <original>A</original>
    <variation>V</variation>
    <location>
        <position position="50"/>
    </location>
</feature>
<feature type="sequence variant" id="VAR_006764" description="In HRH; Toronto; dbSNP:rs137852494." evidence="32">
    <original>R</original>
    <variation>G</variation>
    <location>
        <position position="51"/>
    </location>
</feature>
<feature type="sequence variant" id="VAR_006765" description="In LNS; Banbury." evidence="14">
    <original>R</original>
    <variation>P</variation>
    <location>
        <position position="51"/>
    </location>
</feature>
<feature type="sequence variant" id="VAR_006766" description="In Edinburgh; dbSNP:rs137852502." evidence="7">
    <original>D</original>
    <variation>G</variation>
    <location>
        <position position="52"/>
    </location>
</feature>
<feature type="sequence variant" id="VAR_006767" description="In HRH; MG." evidence="5">
    <original>V</original>
    <variation>A</variation>
    <location>
        <position position="53"/>
    </location>
</feature>
<feature type="sequence variant" id="VAR_006768" description="In HRH and LNS; TE." evidence="5">
    <original>V</original>
    <variation>M</variation>
    <location>
        <position position="53"/>
    </location>
</feature>
<feature type="sequence variant" id="VAR_006769" description="In LNS; Japan-1." evidence="21">
    <original>M</original>
    <variation>L</variation>
    <location>
        <position position="54"/>
    </location>
</feature>
<feature type="sequence variant" id="VAR_006770" description="In LNS; Montreal; dbSNP:rs137852495." evidence="19">
    <original>M</original>
    <variation>T</variation>
    <location>
        <position position="57"/>
    </location>
</feature>
<feature type="sequence variant" id="VAR_006771" description="In HRH; Toowong; dbSNP:rs137852500." evidence="12">
    <original>G</original>
    <variation>R</variation>
    <location>
        <position position="58"/>
    </location>
</feature>
<feature type="sequence variant" id="VAR_071612" description="In HRH; Reduces enzymatic activity; dbSNP:rs1228634091." evidence="20">
    <original>H</original>
    <variation>R</variation>
    <location>
        <position position="60"/>
    </location>
</feature>
<feature type="sequence variant" id="VAR_006772" description="Enzyme activity 37% of normal; asymptomatic." evidence="38">
    <original>H</original>
    <variation>R</variation>
    <location>
        <position position="61"/>
    </location>
</feature>
<feature type="sequence variant" id="VAR_071613" description="In LNS; Asia." evidence="8 10">
    <original>A</original>
    <variation>P</variation>
    <location>
        <position position="64"/>
    </location>
</feature>
<feature type="sequence variant" id="VAR_071614" description="In LNS; Asia." evidence="8 10">
    <original>L</original>
    <variation>P</variation>
    <location>
        <position position="65"/>
    </location>
</feature>
<feature type="sequence variant" id="VAR_006773" description="In LNS; New Haven/1510, Asia; dbSNP:rs137852487." evidence="8 10 16">
    <original>G</original>
    <variation>E</variation>
    <location>
        <position position="70"/>
    </location>
</feature>
<feature type="sequence variant" id="VAR_006774" description="In LNS; Yale; dbSNP:rs137852488." evidence="25">
    <original>G</original>
    <variation>R</variation>
    <location>
        <position position="71"/>
    </location>
</feature>
<feature type="sequence variant" id="VAR_071615" description="In LNS; Asia." evidence="8 10">
    <original>Y</original>
    <variation>C</variation>
    <location>
        <position position="72"/>
    </location>
</feature>
<feature type="sequence variant" id="VAR_006775" description="In LNS; Flint/RJK 892/DW/Perth/1522, Japan; dbSNP:rs137852481." evidence="15 16 18 29">
    <original>F</original>
    <variation>L</variation>
    <location>
        <position position="74"/>
    </location>
</feature>
<feature type="sequence variant" id="VAR_071616" description="In LNS; Asia." evidence="8 10">
    <original>L</original>
    <variation>Q</variation>
    <location>
        <position position="78"/>
    </location>
</feature>
<feature type="sequence variant" id="VAR_006776" description="In HRH; Swan; dbSNP:rs137852501." evidence="12">
    <original>L</original>
    <variation>V</variation>
    <location>
        <position position="78"/>
    </location>
</feature>
<feature type="sequence variant" id="VAR_006777" description="In HRH; Arlington; dbSNP:rs137852478." evidence="22">
    <original>D</original>
    <variation>V</variation>
    <location>
        <position position="80"/>
    </location>
</feature>
<feature type="sequence variant" id="VAR_006778" description="In HRH; Munich; dbSNP:rs137852485." evidence="28 31">
    <original>S</original>
    <variation>R</variation>
    <location>
        <position position="104"/>
    </location>
</feature>
<feature type="sequence variant" id="VAR_071617" description="In LNS; Asia." evidence="8">
    <location>
        <begin position="107"/>
        <end position="110"/>
    </location>
</feature>
<feature type="sequence variant" id="VAR_006779" description="In HRH; London; dbSNP:rs137852482." evidence="26 30">
    <original>S</original>
    <variation>L</variation>
    <location>
        <position position="110"/>
    </location>
</feature>
<feature type="sequence variant" id="VAR_071618" description="In HRH; Asia." evidence="10">
    <original>T</original>
    <variation>P</variation>
    <location>
        <position position="124"/>
    </location>
</feature>
<feature type="sequence variant" id="VAR_006780" description="In LNS; Midland/RJK 896; dbSNP:rs137852483." evidence="18 27">
    <original>V</original>
    <variation>D</variation>
    <location>
        <position position="130"/>
    </location>
</feature>
<feature type="sequence variant" id="VAR_006781" description="In LNS; RJK 1784." evidence="18">
    <original>L</original>
    <variation>S</variation>
    <location>
        <position position="131"/>
    </location>
</feature>
<feature type="sequence variant" id="VAR_006782" description="In HRH; Ann-Arbor; dbSNP:rs137852477." evidence="23">
    <original>I</original>
    <variation>M</variation>
    <location>
        <position position="132"/>
    </location>
</feature>
<feature type="sequence variant" id="VAR_006783" description="In LNS; Runcorn." evidence="14">
    <original>I</original>
    <variation>T</variation>
    <location>
        <position position="132"/>
    </location>
</feature>
<feature type="sequence variant" id="VAR_006784" description="In HRH; Yeronga." evidence="6">
    <original>D</original>
    <variation>G</variation>
    <location>
        <position position="135"/>
    </location>
</feature>
<feature type="sequence variant" id="VAR_006785" description="In LNS; RJK 1210; dbSNP:rs137852496." evidence="18">
    <original>M</original>
    <variation>K</variation>
    <location>
        <position position="143"/>
    </location>
</feature>
<feature type="sequence variant" id="VAR_006786" description="In LNS; RW." evidence="5">
    <original>M</original>
    <variation>MA</variation>
    <location>
        <position position="143"/>
    </location>
</feature>
<feature type="sequence variant" id="VAR_071619" description="In LNS; Asia." evidence="8 10">
    <original>L</original>
    <variation>P</variation>
    <location>
        <position position="147"/>
    </location>
</feature>
<feature type="sequence variant" id="VAR_071620" description="In LNS; Asia." evidence="8 10">
    <original>K</original>
    <variation>E</variation>
    <location>
        <position position="159"/>
    </location>
</feature>
<feature type="sequence variant" id="VAR_071621" description="In LNS; Asia." evidence="10">
    <original>K</original>
    <variation>KV</variation>
    <location>
        <position position="159"/>
    </location>
</feature>
<feature type="sequence variant" id="VAR_006787" description="In HRH; Milwaukee/RJK 949; dbSNP:rs137852484." evidence="18">
    <original>A</original>
    <variation>S</variation>
    <location>
        <position position="161"/>
    </location>
</feature>
<feature type="sequence variant" id="VAR_006788" description="In LNS; Farnham." evidence="14">
    <original>S</original>
    <variation>R</variation>
    <location>
        <position position="162"/>
    </location>
</feature>
<feature type="sequence variant" id="VAR_006789" description="In HRH; Brisbane; dbSNP:rs137852498." evidence="17">
    <original>T</original>
    <variation>I</variation>
    <location>
        <position position="168"/>
    </location>
</feature>
<feature type="sequence variant" id="VAR_006790" description="In LNS; Marlow; dbSNP:rs137852493." evidence="14">
    <original>P</original>
    <variation>L</variation>
    <location>
        <position position="176"/>
    </location>
</feature>
<feature type="sequence variant" id="VAR_006791" description="In LNS; Roanne." evidence="39">
    <original>D</original>
    <variation>V</variation>
    <location>
        <position position="177"/>
    </location>
</feature>
<feature type="sequence variant" id="VAR_006792" description="In LNS; RJK 2185; dbSNP:rs137852492." evidence="18">
    <original>D</original>
    <variation>Y</variation>
    <location>
        <position position="177"/>
    </location>
</feature>
<feature type="sequence variant" id="VAR_006794" description="In HRH; Japan-2." evidence="21">
    <original>VG</original>
    <variation>GR</variation>
    <location>
        <begin position="179"/>
        <end position="180"/>
    </location>
</feature>
<feature type="sequence variant" id="VAR_006793" description="In LNS; Michigan.">
    <location>
        <position position="179"/>
    </location>
</feature>
<feature type="sequence variant" id="VAR_006796" description="In HRH; JF." evidence="16">
    <original>I</original>
    <variation>T</variation>
    <location>
        <position position="183"/>
    </location>
</feature>
<feature type="sequence variant" id="VAR_071622" description="In HRH; Asia." evidence="10">
    <original>D</original>
    <variation>G</variation>
    <location>
        <position position="185"/>
    </location>
</feature>
<feature type="sequence variant" id="VAR_006795" description="In HRH and LNS; Asia." evidence="8 10 11">
    <original>V</original>
    <variation>A</variation>
    <location>
        <position position="188"/>
    </location>
</feature>
<feature type="sequence variant" id="VAR_071623" description="In HRH; Asia." evidence="8 10">
    <original>A</original>
    <variation>V</variation>
    <location>
        <position position="192"/>
    </location>
</feature>
<feature type="sequence variant" id="VAR_006797" description="In HRH; Moose-Jaw; results in cooperativity and decreased substrate affinities; dbSNP:rs137852504." evidence="36">
    <original>D</original>
    <variation>E</variation>
    <location>
        <position position="194"/>
    </location>
</feature>
<feature type="sequence variant" id="VAR_006798" description="In LNS; Kinston/RJK 2188; dbSNP:rs267606863." evidence="18 33">
    <original>D</original>
    <variation>N</variation>
    <location>
        <position position="194"/>
    </location>
</feature>
<feature type="sequence variant" id="VAR_006799" description="In HRH; Dirranbandi, Asia." evidence="8 10">
    <original>Y</original>
    <variation>C</variation>
    <location>
        <position position="195"/>
    </location>
</feature>
<feature type="sequence variant" id="VAR_006800" description="In LNS; New Briton/RJK 950; dbSNP:rs137852486." evidence="18">
    <original>F</original>
    <variation>V</variation>
    <location>
        <position position="199"/>
    </location>
</feature>
<feature type="sequence variant" id="VAR_006801" description="In HRH; Ashville; dbSNP:rs137852479." evidence="24">
    <original>D</original>
    <variation>G</variation>
    <location>
        <position position="201"/>
    </location>
</feature>
<feature type="sequence variant" id="VAR_006802" description="In HRH and LNS; RB." evidence="5">
    <original>D</original>
    <variation>N</variation>
    <location>
        <position position="201"/>
    </location>
</feature>
<feature type="sequence variant" id="VAR_006803" description="In LNS; GM." evidence="5">
    <original>D</original>
    <variation>Y</variation>
    <location>
        <position position="201"/>
    </location>
</feature>
<feature type="sequence variant" id="VAR_006804" description="In LNS; RJK 1874; dbSNP:rs137852490." evidence="18">
    <original>H</original>
    <variation>D</variation>
    <location>
        <position position="204"/>
    </location>
</feature>
<feature type="sequence variant" id="VAR_006805" description="In LNS; 779." evidence="16">
    <original>H</original>
    <variation>R</variation>
    <location>
        <position position="204"/>
    </location>
</feature>
<feature type="sequence variant" id="VAR_006806" description="In LNS; Reading/RJK 1727." evidence="18">
    <original>C</original>
    <variation>Y</variation>
    <location>
        <position position="206"/>
    </location>
</feature>
<feature type="mutagenesis site" description="Reduced affinity for hypoxanthine, phosphoribosylpyrophosphate and IMP. Reduced catalytic activity." evidence="3">
    <original>K</original>
    <variation>A</variation>
    <location>
        <position position="69"/>
    </location>
</feature>
<feature type="strand" evidence="45">
    <location>
        <begin position="7"/>
        <end position="9"/>
    </location>
</feature>
<feature type="strand" evidence="51">
    <location>
        <begin position="12"/>
        <end position="14"/>
    </location>
</feature>
<feature type="helix" evidence="49">
    <location>
        <begin position="19"/>
        <end position="21"/>
    </location>
</feature>
<feature type="helix" evidence="49">
    <location>
        <begin position="26"/>
        <end position="28"/>
    </location>
</feature>
<feature type="turn" evidence="49">
    <location>
        <begin position="29"/>
        <end position="31"/>
    </location>
</feature>
<feature type="strand" evidence="49">
    <location>
        <begin position="32"/>
        <end position="37"/>
    </location>
</feature>
<feature type="helix" evidence="49">
    <location>
        <begin position="39"/>
        <end position="57"/>
    </location>
</feature>
<feature type="strand" evidence="49">
    <location>
        <begin position="62"/>
        <end position="68"/>
    </location>
</feature>
<feature type="turn" evidence="49">
    <location>
        <begin position="69"/>
        <end position="71"/>
    </location>
</feature>
<feature type="helix" evidence="49">
    <location>
        <begin position="72"/>
        <end position="87"/>
    </location>
</feature>
<feature type="strand" evidence="49">
    <location>
        <begin position="88"/>
        <end position="90"/>
    </location>
</feature>
<feature type="strand" evidence="49">
    <location>
        <begin position="95"/>
        <end position="101"/>
    </location>
</feature>
<feature type="strand" evidence="44">
    <location>
        <begin position="107"/>
        <end position="109"/>
    </location>
</feature>
<feature type="strand" evidence="50">
    <location>
        <begin position="115"/>
        <end position="118"/>
    </location>
</feature>
<feature type="helix" evidence="47">
    <location>
        <begin position="119"/>
        <end position="121"/>
    </location>
</feature>
<feature type="helix" evidence="49">
    <location>
        <begin position="123"/>
        <end position="125"/>
    </location>
</feature>
<feature type="strand" evidence="49">
    <location>
        <begin position="128"/>
        <end position="140"/>
    </location>
</feature>
<feature type="helix" evidence="49">
    <location>
        <begin position="141"/>
        <end position="150"/>
    </location>
</feature>
<feature type="helix" evidence="49">
    <location>
        <begin position="151"/>
        <end position="153"/>
    </location>
</feature>
<feature type="strand" evidence="49">
    <location>
        <begin position="156"/>
        <end position="166"/>
    </location>
</feature>
<feature type="strand" evidence="46">
    <location>
        <begin position="169"/>
        <end position="171"/>
    </location>
</feature>
<feature type="strand" evidence="49">
    <location>
        <begin position="177"/>
        <end position="183"/>
    </location>
</feature>
<feature type="strand" evidence="49">
    <location>
        <begin position="188"/>
        <end position="190"/>
    </location>
</feature>
<feature type="strand" evidence="48">
    <location>
        <begin position="195"/>
        <end position="197"/>
    </location>
</feature>
<feature type="strand" evidence="43">
    <location>
        <begin position="198"/>
        <end position="201"/>
    </location>
</feature>
<feature type="strand" evidence="49">
    <location>
        <begin position="203"/>
        <end position="208"/>
    </location>
</feature>
<feature type="helix" evidence="49">
    <location>
        <begin position="210"/>
        <end position="215"/>
    </location>
</feature>
<accession>P00492</accession>
<accession>A6NHF0</accession>
<accession>B2R8M9</accession>
<keyword id="KW-0002">3D-structure</keyword>
<keyword id="KW-0007">Acetylation</keyword>
<keyword id="KW-0963">Cytoplasm</keyword>
<keyword id="KW-0903">Direct protein sequencing</keyword>
<keyword id="KW-0225">Disease variant</keyword>
<keyword id="KW-0328">Glycosyltransferase</keyword>
<keyword id="KW-0335">Gout</keyword>
<keyword id="KW-1017">Isopeptide bond</keyword>
<keyword id="KW-0460">Magnesium</keyword>
<keyword id="KW-0479">Metal-binding</keyword>
<keyword id="KW-0547">Nucleotide-binding</keyword>
<keyword id="KW-0597">Phosphoprotein</keyword>
<keyword id="KW-1267">Proteomics identification</keyword>
<keyword id="KW-0660">Purine salvage</keyword>
<keyword id="KW-1185">Reference proteome</keyword>
<keyword id="KW-0808">Transferase</keyword>
<keyword id="KW-0832">Ubl conjugation</keyword>
<comment type="function">
    <text>Converts guanine to guanosine monophosphate, and hypoxanthine to inosine monophosphate. Transfers the 5-phosphoribosyl group from 5-phosphoribosylpyrophosphate onto the purine. Plays a central role in the generation of purine nucleotides through the purine salvage pathway.</text>
</comment>
<comment type="catalytic activity">
    <reaction evidence="3 13">
        <text>IMP + diphosphate = hypoxanthine + 5-phospho-alpha-D-ribose 1-diphosphate</text>
        <dbReference type="Rhea" id="RHEA:17973"/>
        <dbReference type="ChEBI" id="CHEBI:17368"/>
        <dbReference type="ChEBI" id="CHEBI:33019"/>
        <dbReference type="ChEBI" id="CHEBI:58017"/>
        <dbReference type="ChEBI" id="CHEBI:58053"/>
        <dbReference type="EC" id="2.4.2.8"/>
    </reaction>
    <physiologicalReaction direction="right-to-left" evidence="3 13">
        <dbReference type="Rhea" id="RHEA:17975"/>
    </physiologicalReaction>
</comment>
<comment type="catalytic activity">
    <reaction evidence="3 13">
        <text>GMP + diphosphate = guanine + 5-phospho-alpha-D-ribose 1-diphosphate</text>
        <dbReference type="Rhea" id="RHEA:25424"/>
        <dbReference type="ChEBI" id="CHEBI:16235"/>
        <dbReference type="ChEBI" id="CHEBI:33019"/>
        <dbReference type="ChEBI" id="CHEBI:58017"/>
        <dbReference type="ChEBI" id="CHEBI:58115"/>
        <dbReference type="EC" id="2.4.2.8"/>
    </reaction>
    <physiologicalReaction direction="right-to-left" evidence="3 13">
        <dbReference type="Rhea" id="RHEA:25426"/>
    </physiologicalReaction>
</comment>
<comment type="cofactor">
    <cofactor>
        <name>Mg(2+)</name>
        <dbReference type="ChEBI" id="CHEBI:18420"/>
    </cofactor>
    <text>Binds 2 magnesium ions per subunit. The magnesium ions are essentially bound to the substrate and have few direct interactions with the protein.</text>
</comment>
<comment type="biophysicochemical properties">
    <kinetics>
        <KM evidence="3">5.4 uM for IMP</KM>
        <KM evidence="3">0.45 uM for hypoxanthine</KM>
        <KM evidence="3">25 uM for pyrophosphate</KM>
        <KM evidence="3">31 uM for phosphoribosylpyrophosphate</KM>
    </kinetics>
</comment>
<comment type="pathway">
    <text>Purine metabolism; IMP biosynthesis via salvage pathway; IMP from hypoxanthine: step 1/1.</text>
</comment>
<comment type="subunit">
    <text evidence="3 4 9 37">Homotetramer.</text>
</comment>
<comment type="interaction">
    <interactant intactId="EBI-748210">
        <id>P00492</id>
    </interactant>
    <interactant intactId="EBI-747840">
        <id>Q96G04</id>
        <label>EEF2KMT</label>
    </interactant>
    <organismsDiffer>false</organismsDiffer>
    <experiments>3</experiments>
</comment>
<comment type="interaction">
    <interactant intactId="EBI-748210">
        <id>P00492</id>
    </interactant>
    <interactant intactId="EBI-11958551">
        <id>Q8N7B9-2</id>
        <label>EFCAB3</label>
    </interactant>
    <organismsDiffer>false</organismsDiffer>
    <experiments>3</experiments>
</comment>
<comment type="interaction">
    <interactant intactId="EBI-748210">
        <id>P00492</id>
    </interactant>
    <interactant intactId="EBI-744239">
        <id>Q14749</id>
        <label>GNMT</label>
    </interactant>
    <organismsDiffer>false</organismsDiffer>
    <experiments>3</experiments>
</comment>
<comment type="interaction">
    <interactant intactId="EBI-748210">
        <id>P00492</id>
    </interactant>
    <interactant intactId="EBI-748210">
        <id>P00492</id>
        <label>HPRT1</label>
    </interactant>
    <organismsDiffer>false</organismsDiffer>
    <experiments>6</experiments>
</comment>
<comment type="interaction">
    <interactant intactId="EBI-748210">
        <id>P00492</id>
    </interactant>
    <interactant intactId="EBI-466029">
        <id>P42858</id>
        <label>HTT</label>
    </interactant>
    <organismsDiffer>false</organismsDiffer>
    <experiments>15</experiments>
</comment>
<comment type="interaction">
    <interactant intactId="EBI-748210">
        <id>P00492</id>
    </interactant>
    <interactant intactId="EBI-1047335">
        <id>Q9H1K1</id>
        <label>ISCU</label>
    </interactant>
    <organismsDiffer>false</organismsDiffer>
    <experiments>4</experiments>
</comment>
<comment type="interaction">
    <interactant intactId="EBI-748210">
        <id>P00492</id>
    </interactant>
    <interactant intactId="EBI-741158">
        <id>Q96HA8</id>
        <label>NTAQ1</label>
    </interactant>
    <organismsDiffer>false</organismsDiffer>
    <experiments>10</experiments>
</comment>
<comment type="interaction">
    <interactant intactId="EBI-748210">
        <id>P00492</id>
    </interactant>
    <interactant intactId="EBI-739759">
        <id>Q9NRG1</id>
        <label>PRTFDC1</label>
    </interactant>
    <organismsDiffer>false</organismsDiffer>
    <experiments>12</experiments>
</comment>
<comment type="interaction">
    <interactant intactId="EBI-748210">
        <id>P00492</id>
    </interactant>
    <interactant intactId="EBI-727004">
        <id>O00560</id>
        <label>SDCBP</label>
    </interactant>
    <organismsDiffer>false</organismsDiffer>
    <experiments>7</experiments>
</comment>
<comment type="interaction">
    <interactant intactId="EBI-748210">
        <id>P00492</id>
    </interactant>
    <interactant intactId="EBI-742688">
        <id>Q9NZD8</id>
        <label>SPG21</label>
    </interactant>
    <organismsDiffer>false</organismsDiffer>
    <experiments>3</experiments>
</comment>
<comment type="interaction">
    <interactant intactId="EBI-748210">
        <id>P00492</id>
    </interactant>
    <interactant intactId="EBI-5235340">
        <id>Q7Z699</id>
        <label>SPRED1</label>
    </interactant>
    <organismsDiffer>false</organismsDiffer>
    <experiments>3</experiments>
</comment>
<comment type="interaction">
    <interactant intactId="EBI-748210">
        <id>P00492</id>
    </interactant>
    <interactant intactId="EBI-10268630">
        <id>Q8N9Q2</id>
        <label>SREK1IP1</label>
    </interactant>
    <organismsDiffer>false</organismsDiffer>
    <experiments>3</experiments>
</comment>
<comment type="subcellular location">
    <subcellularLocation>
        <location>Cytoplasm</location>
    </subcellularLocation>
</comment>
<comment type="disease" evidence="5 8 10 14 15 16 17 18 19 20 21 22 25 27 29 33 35 39">
    <disease id="DI-01892">
        <name>Lesch-Nyhan syndrome</name>
        <acronym>LNS</acronym>
        <description>Characterized by complete lack of enzymatic activity that results in hyperuricemia, choreoathetosis, intellectual disability, and compulsive self-mutilation.</description>
        <dbReference type="MIM" id="300322"/>
    </disease>
    <text>The disease is caused by variants affecting the gene represented in this entry.</text>
</comment>
<comment type="disease" evidence="5 6 8 10 12 14 15 20 22 23 24 26 28 30 31 32 36">
    <disease id="DI-01683">
        <name>Hyperuricemia, HPRT-related</name>
        <acronym>HRH</acronym>
        <description>An X-linked metabolic disorder characterized by uric acid excess in the blood, renal stones, uric acid nephropathy, and renal obstruction. After puberty, the hyperuricemia may cause gout.</description>
        <dbReference type="MIM" id="300323"/>
    </disease>
    <text>The disease is caused by variants affecting the gene represented in this entry.</text>
</comment>
<comment type="similarity">
    <text evidence="40">Belongs to the purine/pyrimidine phosphoribosyltransferase family.</text>
</comment>
<comment type="online information" name="Wikipedia">
    <link uri="https://en.wikipedia.org/wiki/Hypoxanthine-guanine_phosphoribosyltransferase"/>
    <text>Hypoxanthine-guanine phosphoribosyltransferase entry</text>
</comment>
<evidence type="ECO:0000250" key="1">
    <source>
        <dbReference type="UniProtKB" id="P00493"/>
    </source>
</evidence>
<evidence type="ECO:0000250" key="2">
    <source>
        <dbReference type="UniProtKB" id="P27605"/>
    </source>
</evidence>
<evidence type="ECO:0000269" key="3">
    <source>
    </source>
</evidence>
<evidence type="ECO:0000269" key="4">
    <source>
    </source>
</evidence>
<evidence type="ECO:0000269" key="5">
    <source>
    </source>
</evidence>
<evidence type="ECO:0000269" key="6">
    <source>
    </source>
</evidence>
<evidence type="ECO:0000269" key="7">
    <source>
    </source>
</evidence>
<evidence type="ECO:0000269" key="8">
    <source>
    </source>
</evidence>
<evidence type="ECO:0000269" key="9">
    <source>
    </source>
</evidence>
<evidence type="ECO:0000269" key="10">
    <source>
    </source>
</evidence>
<evidence type="ECO:0000269" key="11">
    <source>
    </source>
</evidence>
<evidence type="ECO:0000269" key="12">
    <source>
    </source>
</evidence>
<evidence type="ECO:0000269" key="13">
    <source>
    </source>
</evidence>
<evidence type="ECO:0000269" key="14">
    <source>
    </source>
</evidence>
<evidence type="ECO:0000269" key="15">
    <source>
    </source>
</evidence>
<evidence type="ECO:0000269" key="16">
    <source>
    </source>
</evidence>
<evidence type="ECO:0000269" key="17">
    <source>
    </source>
</evidence>
<evidence type="ECO:0000269" key="18">
    <source>
    </source>
</evidence>
<evidence type="ECO:0000269" key="19">
    <source>
    </source>
</evidence>
<evidence type="ECO:0000269" key="20">
    <source>
    </source>
</evidence>
<evidence type="ECO:0000269" key="21">
    <source>
    </source>
</evidence>
<evidence type="ECO:0000269" key="22">
    <source>
    </source>
</evidence>
<evidence type="ECO:0000269" key="23">
    <source>
    </source>
</evidence>
<evidence type="ECO:0000269" key="24">
    <source>
    </source>
</evidence>
<evidence type="ECO:0000269" key="25">
    <source>
    </source>
</evidence>
<evidence type="ECO:0000269" key="26">
    <source>
    </source>
</evidence>
<evidence type="ECO:0000269" key="27">
    <source>
    </source>
</evidence>
<evidence type="ECO:0000269" key="28">
    <source>
    </source>
</evidence>
<evidence type="ECO:0000269" key="29">
    <source>
    </source>
</evidence>
<evidence type="ECO:0000269" key="30">
    <source>
    </source>
</evidence>
<evidence type="ECO:0000269" key="31">
    <source>
    </source>
</evidence>
<evidence type="ECO:0000269" key="32">
    <source>
    </source>
</evidence>
<evidence type="ECO:0000269" key="33">
    <source>
    </source>
</evidence>
<evidence type="ECO:0000269" key="34">
    <source>
    </source>
</evidence>
<evidence type="ECO:0000269" key="35">
    <source>
    </source>
</evidence>
<evidence type="ECO:0000269" key="36">
    <source>
    </source>
</evidence>
<evidence type="ECO:0000269" key="37">
    <source>
    </source>
</evidence>
<evidence type="ECO:0000269" key="38">
    <source>
    </source>
</evidence>
<evidence type="ECO:0000269" key="39">
    <source>
    </source>
</evidence>
<evidence type="ECO:0000305" key="40"/>
<evidence type="ECO:0007744" key="41">
    <source>
    </source>
</evidence>
<evidence type="ECO:0007744" key="42">
    <source>
    </source>
</evidence>
<evidence type="ECO:0007829" key="43">
    <source>
        <dbReference type="PDB" id="1BZY"/>
    </source>
</evidence>
<evidence type="ECO:0007829" key="44">
    <source>
        <dbReference type="PDB" id="1D6N"/>
    </source>
</evidence>
<evidence type="ECO:0007829" key="45">
    <source>
        <dbReference type="PDB" id="1HMP"/>
    </source>
</evidence>
<evidence type="ECO:0007829" key="46">
    <source>
        <dbReference type="PDB" id="1Z7G"/>
    </source>
</evidence>
<evidence type="ECO:0007829" key="47">
    <source>
        <dbReference type="PDB" id="4RAC"/>
    </source>
</evidence>
<evidence type="ECO:0007829" key="48">
    <source>
        <dbReference type="PDB" id="5BSK"/>
    </source>
</evidence>
<evidence type="ECO:0007829" key="49">
    <source>
        <dbReference type="PDB" id="5HIA"/>
    </source>
</evidence>
<evidence type="ECO:0007829" key="50">
    <source>
        <dbReference type="PDB" id="6BNJ"/>
    </source>
</evidence>
<evidence type="ECO:0007829" key="51">
    <source>
        <dbReference type="PDB" id="7SAN"/>
    </source>
</evidence>
<gene>
    <name type="primary">HPRT1</name>
    <name type="synonym">HPRT</name>
</gene>
<reference key="1">
    <citation type="journal article" date="1983" name="Proc. Natl. Acad. Sci. U.S.A.">
        <title>Isolation and characterization of a full-length expressible cDNA for human hypoxanthine phosphoribosyl transferase.</title>
        <authorList>
            <person name="Jolly D.J."/>
            <person name="Okayama H."/>
            <person name="Berg P."/>
            <person name="Esty A.C."/>
            <person name="Filpula D."/>
            <person name="Bohlen P."/>
            <person name="Johnson G.G."/>
            <person name="Shively J.E."/>
            <person name="Hunkapillar T."/>
            <person name="Friedmann T."/>
        </authorList>
    </citation>
    <scope>NUCLEOTIDE SEQUENCE [MRNA]</scope>
</reference>
<reference key="2">
    <citation type="journal article" date="1990" name="Genomics">
        <title>Automated DNA sequencing of the human HPRT locus.</title>
        <authorList>
            <person name="Edwards A."/>
            <person name="Voss H."/>
            <person name="Rice P."/>
            <person name="Civitello A."/>
            <person name="Stegemann J."/>
            <person name="Schwager C."/>
            <person name="Zimmermann J."/>
            <person name="Erfle H."/>
            <person name="Caskey C.T."/>
            <person name="Ansorge W."/>
        </authorList>
    </citation>
    <scope>NUCLEOTIDE SEQUENCE [GENOMIC DNA]</scope>
</reference>
<reference key="3">
    <citation type="journal article" date="2004" name="Nat. Genet.">
        <title>Complete sequencing and characterization of 21,243 full-length human cDNAs.</title>
        <authorList>
            <person name="Ota T."/>
            <person name="Suzuki Y."/>
            <person name="Nishikawa T."/>
            <person name="Otsuki T."/>
            <person name="Sugiyama T."/>
            <person name="Irie R."/>
            <person name="Wakamatsu A."/>
            <person name="Hayashi K."/>
            <person name="Sato H."/>
            <person name="Nagai K."/>
            <person name="Kimura K."/>
            <person name="Makita H."/>
            <person name="Sekine M."/>
            <person name="Obayashi M."/>
            <person name="Nishi T."/>
            <person name="Shibahara T."/>
            <person name="Tanaka T."/>
            <person name="Ishii S."/>
            <person name="Yamamoto J."/>
            <person name="Saito K."/>
            <person name="Kawai Y."/>
            <person name="Isono Y."/>
            <person name="Nakamura Y."/>
            <person name="Nagahari K."/>
            <person name="Murakami K."/>
            <person name="Yasuda T."/>
            <person name="Iwayanagi T."/>
            <person name="Wagatsuma M."/>
            <person name="Shiratori A."/>
            <person name="Sudo H."/>
            <person name="Hosoiri T."/>
            <person name="Kaku Y."/>
            <person name="Kodaira H."/>
            <person name="Kondo H."/>
            <person name="Sugawara M."/>
            <person name="Takahashi M."/>
            <person name="Kanda K."/>
            <person name="Yokoi T."/>
            <person name="Furuya T."/>
            <person name="Kikkawa E."/>
            <person name="Omura Y."/>
            <person name="Abe K."/>
            <person name="Kamihara K."/>
            <person name="Katsuta N."/>
            <person name="Sato K."/>
            <person name="Tanikawa M."/>
            <person name="Yamazaki M."/>
            <person name="Ninomiya K."/>
            <person name="Ishibashi T."/>
            <person name="Yamashita H."/>
            <person name="Murakawa K."/>
            <person name="Fujimori K."/>
            <person name="Tanai H."/>
            <person name="Kimata M."/>
            <person name="Watanabe M."/>
            <person name="Hiraoka S."/>
            <person name="Chiba Y."/>
            <person name="Ishida S."/>
            <person name="Ono Y."/>
            <person name="Takiguchi S."/>
            <person name="Watanabe S."/>
            <person name="Yosida M."/>
            <person name="Hotuta T."/>
            <person name="Kusano J."/>
            <person name="Kanehori K."/>
            <person name="Takahashi-Fujii A."/>
            <person name="Hara H."/>
            <person name="Tanase T.-O."/>
            <person name="Nomura Y."/>
            <person name="Togiya S."/>
            <person name="Komai F."/>
            <person name="Hara R."/>
            <person name="Takeuchi K."/>
            <person name="Arita M."/>
            <person name="Imose N."/>
            <person name="Musashino K."/>
            <person name="Yuuki H."/>
            <person name="Oshima A."/>
            <person name="Sasaki N."/>
            <person name="Aotsuka S."/>
            <person name="Yoshikawa Y."/>
            <person name="Matsunawa H."/>
            <person name="Ichihara T."/>
            <person name="Shiohata N."/>
            <person name="Sano S."/>
            <person name="Moriya S."/>
            <person name="Momiyama H."/>
            <person name="Satoh N."/>
            <person name="Takami S."/>
            <person name="Terashima Y."/>
            <person name="Suzuki O."/>
            <person name="Nakagawa S."/>
            <person name="Senoh A."/>
            <person name="Mizoguchi H."/>
            <person name="Goto Y."/>
            <person name="Shimizu F."/>
            <person name="Wakebe H."/>
            <person name="Hishigaki H."/>
            <person name="Watanabe T."/>
            <person name="Sugiyama A."/>
            <person name="Takemoto M."/>
            <person name="Kawakami B."/>
            <person name="Yamazaki M."/>
            <person name="Watanabe K."/>
            <person name="Kumagai A."/>
            <person name="Itakura S."/>
            <person name="Fukuzumi Y."/>
            <person name="Fujimori Y."/>
            <person name="Komiyama M."/>
            <person name="Tashiro H."/>
            <person name="Tanigami A."/>
            <person name="Fujiwara T."/>
            <person name="Ono T."/>
            <person name="Yamada K."/>
            <person name="Fujii Y."/>
            <person name="Ozaki K."/>
            <person name="Hirao M."/>
            <person name="Ohmori Y."/>
            <person name="Kawabata A."/>
            <person name="Hikiji T."/>
            <person name="Kobatake N."/>
            <person name="Inagaki H."/>
            <person name="Ikema Y."/>
            <person name="Okamoto S."/>
            <person name="Okitani R."/>
            <person name="Kawakami T."/>
            <person name="Noguchi S."/>
            <person name="Itoh T."/>
            <person name="Shigeta K."/>
            <person name="Senba T."/>
            <person name="Matsumura K."/>
            <person name="Nakajima Y."/>
            <person name="Mizuno T."/>
            <person name="Morinaga M."/>
            <person name="Sasaki M."/>
            <person name="Togashi T."/>
            <person name="Oyama M."/>
            <person name="Hata H."/>
            <person name="Watanabe M."/>
            <person name="Komatsu T."/>
            <person name="Mizushima-Sugano J."/>
            <person name="Satoh T."/>
            <person name="Shirai Y."/>
            <person name="Takahashi Y."/>
            <person name="Nakagawa K."/>
            <person name="Okumura K."/>
            <person name="Nagase T."/>
            <person name="Nomura N."/>
            <person name="Kikuchi H."/>
            <person name="Masuho Y."/>
            <person name="Yamashita R."/>
            <person name="Nakai K."/>
            <person name="Yada T."/>
            <person name="Nakamura Y."/>
            <person name="Ohara O."/>
            <person name="Isogai T."/>
            <person name="Sugano S."/>
        </authorList>
    </citation>
    <scope>NUCLEOTIDE SEQUENCE [LARGE SCALE MRNA]</scope>
</reference>
<reference key="4">
    <citation type="submission" date="2004-10" db="EMBL/GenBank/DDBJ databases">
        <title>Cloning of human full-length CDSs in BD Creator(TM) system donor vector.</title>
        <authorList>
            <person name="Kalnine N."/>
            <person name="Chen X."/>
            <person name="Rolfs A."/>
            <person name="Halleck A."/>
            <person name="Hines L."/>
            <person name="Eisenstein S."/>
            <person name="Koundinya M."/>
            <person name="Raphael J."/>
            <person name="Moreira D."/>
            <person name="Kelley T."/>
            <person name="LaBaer J."/>
            <person name="Lin Y."/>
            <person name="Phelan M."/>
            <person name="Farmer A."/>
        </authorList>
    </citation>
    <scope>NUCLEOTIDE SEQUENCE [LARGE SCALE MRNA]</scope>
</reference>
<reference key="5">
    <citation type="submission" date="2004-10" db="EMBL/GenBank/DDBJ databases">
        <authorList>
            <consortium name="NIEHS SNPs program"/>
        </authorList>
    </citation>
    <scope>NUCLEOTIDE SEQUENCE [GENOMIC DNA]</scope>
</reference>
<reference key="6">
    <citation type="journal article" date="2005" name="Nature">
        <title>The DNA sequence of the human X chromosome.</title>
        <authorList>
            <person name="Ross M.T."/>
            <person name="Grafham D.V."/>
            <person name="Coffey A.J."/>
            <person name="Scherer S."/>
            <person name="McLay K."/>
            <person name="Muzny D."/>
            <person name="Platzer M."/>
            <person name="Howell G.R."/>
            <person name="Burrows C."/>
            <person name="Bird C.P."/>
            <person name="Frankish A."/>
            <person name="Lovell F.L."/>
            <person name="Howe K.L."/>
            <person name="Ashurst J.L."/>
            <person name="Fulton R.S."/>
            <person name="Sudbrak R."/>
            <person name="Wen G."/>
            <person name="Jones M.C."/>
            <person name="Hurles M.E."/>
            <person name="Andrews T.D."/>
            <person name="Scott C.E."/>
            <person name="Searle S."/>
            <person name="Ramser J."/>
            <person name="Whittaker A."/>
            <person name="Deadman R."/>
            <person name="Carter N.P."/>
            <person name="Hunt S.E."/>
            <person name="Chen R."/>
            <person name="Cree A."/>
            <person name="Gunaratne P."/>
            <person name="Havlak P."/>
            <person name="Hodgson A."/>
            <person name="Metzker M.L."/>
            <person name="Richards S."/>
            <person name="Scott G."/>
            <person name="Steffen D."/>
            <person name="Sodergren E."/>
            <person name="Wheeler D.A."/>
            <person name="Worley K.C."/>
            <person name="Ainscough R."/>
            <person name="Ambrose K.D."/>
            <person name="Ansari-Lari M.A."/>
            <person name="Aradhya S."/>
            <person name="Ashwell R.I."/>
            <person name="Babbage A.K."/>
            <person name="Bagguley C.L."/>
            <person name="Ballabio A."/>
            <person name="Banerjee R."/>
            <person name="Barker G.E."/>
            <person name="Barlow K.F."/>
            <person name="Barrett I.P."/>
            <person name="Bates K.N."/>
            <person name="Beare D.M."/>
            <person name="Beasley H."/>
            <person name="Beasley O."/>
            <person name="Beck A."/>
            <person name="Bethel G."/>
            <person name="Blechschmidt K."/>
            <person name="Brady N."/>
            <person name="Bray-Allen S."/>
            <person name="Bridgeman A.M."/>
            <person name="Brown A.J."/>
            <person name="Brown M.J."/>
            <person name="Bonnin D."/>
            <person name="Bruford E.A."/>
            <person name="Buhay C."/>
            <person name="Burch P."/>
            <person name="Burford D."/>
            <person name="Burgess J."/>
            <person name="Burrill W."/>
            <person name="Burton J."/>
            <person name="Bye J.M."/>
            <person name="Carder C."/>
            <person name="Carrel L."/>
            <person name="Chako J."/>
            <person name="Chapman J.C."/>
            <person name="Chavez D."/>
            <person name="Chen E."/>
            <person name="Chen G."/>
            <person name="Chen Y."/>
            <person name="Chen Z."/>
            <person name="Chinault C."/>
            <person name="Ciccodicola A."/>
            <person name="Clark S.Y."/>
            <person name="Clarke G."/>
            <person name="Clee C.M."/>
            <person name="Clegg S."/>
            <person name="Clerc-Blankenburg K."/>
            <person name="Clifford K."/>
            <person name="Cobley V."/>
            <person name="Cole C.G."/>
            <person name="Conquer J.S."/>
            <person name="Corby N."/>
            <person name="Connor R.E."/>
            <person name="David R."/>
            <person name="Davies J."/>
            <person name="Davis C."/>
            <person name="Davis J."/>
            <person name="Delgado O."/>
            <person name="Deshazo D."/>
            <person name="Dhami P."/>
            <person name="Ding Y."/>
            <person name="Dinh H."/>
            <person name="Dodsworth S."/>
            <person name="Draper H."/>
            <person name="Dugan-Rocha S."/>
            <person name="Dunham A."/>
            <person name="Dunn M."/>
            <person name="Durbin K.J."/>
            <person name="Dutta I."/>
            <person name="Eades T."/>
            <person name="Ellwood M."/>
            <person name="Emery-Cohen A."/>
            <person name="Errington H."/>
            <person name="Evans K.L."/>
            <person name="Faulkner L."/>
            <person name="Francis F."/>
            <person name="Frankland J."/>
            <person name="Fraser A.E."/>
            <person name="Galgoczy P."/>
            <person name="Gilbert J."/>
            <person name="Gill R."/>
            <person name="Gloeckner G."/>
            <person name="Gregory S.G."/>
            <person name="Gribble S."/>
            <person name="Griffiths C."/>
            <person name="Grocock R."/>
            <person name="Gu Y."/>
            <person name="Gwilliam R."/>
            <person name="Hamilton C."/>
            <person name="Hart E.A."/>
            <person name="Hawes A."/>
            <person name="Heath P.D."/>
            <person name="Heitmann K."/>
            <person name="Hennig S."/>
            <person name="Hernandez J."/>
            <person name="Hinzmann B."/>
            <person name="Ho S."/>
            <person name="Hoffs M."/>
            <person name="Howden P.J."/>
            <person name="Huckle E.J."/>
            <person name="Hume J."/>
            <person name="Hunt P.J."/>
            <person name="Hunt A.R."/>
            <person name="Isherwood J."/>
            <person name="Jacob L."/>
            <person name="Johnson D."/>
            <person name="Jones S."/>
            <person name="de Jong P.J."/>
            <person name="Joseph S.S."/>
            <person name="Keenan S."/>
            <person name="Kelly S."/>
            <person name="Kershaw J.K."/>
            <person name="Khan Z."/>
            <person name="Kioschis P."/>
            <person name="Klages S."/>
            <person name="Knights A.J."/>
            <person name="Kosiura A."/>
            <person name="Kovar-Smith C."/>
            <person name="Laird G.K."/>
            <person name="Langford C."/>
            <person name="Lawlor S."/>
            <person name="Leversha M."/>
            <person name="Lewis L."/>
            <person name="Liu W."/>
            <person name="Lloyd C."/>
            <person name="Lloyd D.M."/>
            <person name="Loulseged H."/>
            <person name="Loveland J.E."/>
            <person name="Lovell J.D."/>
            <person name="Lozado R."/>
            <person name="Lu J."/>
            <person name="Lyne R."/>
            <person name="Ma J."/>
            <person name="Maheshwari M."/>
            <person name="Matthews L.H."/>
            <person name="McDowall J."/>
            <person name="McLaren S."/>
            <person name="McMurray A."/>
            <person name="Meidl P."/>
            <person name="Meitinger T."/>
            <person name="Milne S."/>
            <person name="Miner G."/>
            <person name="Mistry S.L."/>
            <person name="Morgan M."/>
            <person name="Morris S."/>
            <person name="Mueller I."/>
            <person name="Mullikin J.C."/>
            <person name="Nguyen N."/>
            <person name="Nordsiek G."/>
            <person name="Nyakatura G."/>
            <person name="O'dell C.N."/>
            <person name="Okwuonu G."/>
            <person name="Palmer S."/>
            <person name="Pandian R."/>
            <person name="Parker D."/>
            <person name="Parrish J."/>
            <person name="Pasternak S."/>
            <person name="Patel D."/>
            <person name="Pearce A.V."/>
            <person name="Pearson D.M."/>
            <person name="Pelan S.E."/>
            <person name="Perez L."/>
            <person name="Porter K.M."/>
            <person name="Ramsey Y."/>
            <person name="Reichwald K."/>
            <person name="Rhodes S."/>
            <person name="Ridler K.A."/>
            <person name="Schlessinger D."/>
            <person name="Schueler M.G."/>
            <person name="Sehra H.K."/>
            <person name="Shaw-Smith C."/>
            <person name="Shen H."/>
            <person name="Sheridan E.M."/>
            <person name="Shownkeen R."/>
            <person name="Skuce C.D."/>
            <person name="Smith M.L."/>
            <person name="Sotheran E.C."/>
            <person name="Steingruber H.E."/>
            <person name="Steward C.A."/>
            <person name="Storey R."/>
            <person name="Swann R.M."/>
            <person name="Swarbreck D."/>
            <person name="Tabor P.E."/>
            <person name="Taudien S."/>
            <person name="Taylor T."/>
            <person name="Teague B."/>
            <person name="Thomas K."/>
            <person name="Thorpe A."/>
            <person name="Timms K."/>
            <person name="Tracey A."/>
            <person name="Trevanion S."/>
            <person name="Tromans A.C."/>
            <person name="d'Urso M."/>
            <person name="Verduzco D."/>
            <person name="Villasana D."/>
            <person name="Waldron L."/>
            <person name="Wall M."/>
            <person name="Wang Q."/>
            <person name="Warren J."/>
            <person name="Warry G.L."/>
            <person name="Wei X."/>
            <person name="West A."/>
            <person name="Whitehead S.L."/>
            <person name="Whiteley M.N."/>
            <person name="Wilkinson J.E."/>
            <person name="Willey D.L."/>
            <person name="Williams G."/>
            <person name="Williams L."/>
            <person name="Williamson A."/>
            <person name="Williamson H."/>
            <person name="Wilming L."/>
            <person name="Woodmansey R.L."/>
            <person name="Wray P.W."/>
            <person name="Yen J."/>
            <person name="Zhang J."/>
            <person name="Zhou J."/>
            <person name="Zoghbi H."/>
            <person name="Zorilla S."/>
            <person name="Buck D."/>
            <person name="Reinhardt R."/>
            <person name="Poustka A."/>
            <person name="Rosenthal A."/>
            <person name="Lehrach H."/>
            <person name="Meindl A."/>
            <person name="Minx P.J."/>
            <person name="Hillier L.W."/>
            <person name="Willard H.F."/>
            <person name="Wilson R.K."/>
            <person name="Waterston R.H."/>
            <person name="Rice C.M."/>
            <person name="Vaudin M."/>
            <person name="Coulson A."/>
            <person name="Nelson D.L."/>
            <person name="Weinstock G."/>
            <person name="Sulston J.E."/>
            <person name="Durbin R.M."/>
            <person name="Hubbard T."/>
            <person name="Gibbs R.A."/>
            <person name="Beck S."/>
            <person name="Rogers J."/>
            <person name="Bentley D.R."/>
        </authorList>
    </citation>
    <scope>NUCLEOTIDE SEQUENCE [LARGE SCALE GENOMIC DNA]</scope>
</reference>
<reference key="7">
    <citation type="submission" date="2005-09" db="EMBL/GenBank/DDBJ databases">
        <authorList>
            <person name="Mural R.J."/>
            <person name="Istrail S."/>
            <person name="Sutton G.G."/>
            <person name="Florea L."/>
            <person name="Halpern A.L."/>
            <person name="Mobarry C.M."/>
            <person name="Lippert R."/>
            <person name="Walenz B."/>
            <person name="Shatkay H."/>
            <person name="Dew I."/>
            <person name="Miller J.R."/>
            <person name="Flanigan M.J."/>
            <person name="Edwards N.J."/>
            <person name="Bolanos R."/>
            <person name="Fasulo D."/>
            <person name="Halldorsson B.V."/>
            <person name="Hannenhalli S."/>
            <person name="Turner R."/>
            <person name="Yooseph S."/>
            <person name="Lu F."/>
            <person name="Nusskern D.R."/>
            <person name="Shue B.C."/>
            <person name="Zheng X.H."/>
            <person name="Zhong F."/>
            <person name="Delcher A.L."/>
            <person name="Huson D.H."/>
            <person name="Kravitz S.A."/>
            <person name="Mouchard L."/>
            <person name="Reinert K."/>
            <person name="Remington K.A."/>
            <person name="Clark A.G."/>
            <person name="Waterman M.S."/>
            <person name="Eichler E.E."/>
            <person name="Adams M.D."/>
            <person name="Hunkapiller M.W."/>
            <person name="Myers E.W."/>
            <person name="Venter J.C."/>
        </authorList>
    </citation>
    <scope>NUCLEOTIDE SEQUENCE [LARGE SCALE GENOMIC DNA]</scope>
</reference>
<reference key="8">
    <citation type="journal article" date="2004" name="Genome Res.">
        <title>The status, quality, and expansion of the NIH full-length cDNA project: the Mammalian Gene Collection (MGC).</title>
        <authorList>
            <consortium name="The MGC Project Team"/>
        </authorList>
    </citation>
    <scope>NUCLEOTIDE SEQUENCE [LARGE SCALE MRNA]</scope>
    <source>
        <tissue>Brain</tissue>
    </source>
</reference>
<reference key="9">
    <citation type="journal article" date="1982" name="J. Biol. Chem.">
        <title>Human hypoxanthine-guanine phosphoribosyltransferase. Complete amino acid sequence of the erythrocyte enzyme.</title>
        <authorList>
            <person name="Wilson J.M."/>
            <person name="Tarr G.E."/>
            <person name="Mahoney W.C."/>
            <person name="Kelley W.N."/>
        </authorList>
    </citation>
    <scope>PROTEIN SEQUENCE OF 2-218</scope>
    <scope>CLEAVAGE OF INITIATOR METHIONINE</scope>
    <scope>ACETYLATION AT ALA-2</scope>
</reference>
<reference key="10">
    <citation type="journal article" date="1986" name="Mol. Cell. Biol.">
        <title>Fine structure of the human hypoxanthine phosphoribosyltransferase gene.</title>
        <authorList>
            <person name="Patel P.I."/>
            <person name="Framson P.E."/>
            <person name="Caskey C.T."/>
            <person name="Chinault A.C."/>
        </authorList>
    </citation>
    <scope>NUCLEOTIDE SEQUENCE [GENOMIC DNA] OF 1-9</scope>
</reference>
<reference key="11">
    <citation type="journal article" date="1992" name="Hum. Mol. Genet.">
        <title>Characterization of mutations in phenotypic variants of hypoxanthine phosphoribosyltransferase deficiency.</title>
        <authorList>
            <person name="Sege-Paterson K."/>
            <person name="Chambers J."/>
            <person name="Page T."/>
            <person name="Jones O.W."/>
            <person name="Nyhan W.L."/>
        </authorList>
    </citation>
    <scope>NUCLEOTIDE SEQUENCE [MRNA] OF 35-50</scope>
    <scope>VARIANTS LNS GLY-8; ASP-16; PRO-50; MET-53; ALA-143 INS; TYR-201 AND ASN-201</scope>
    <scope>VARIANTS HRH TRP-23; HIS-48 AND ALA-53</scope>
</reference>
<reference key="12">
    <citation type="journal article" date="2011" name="BMC Syst. Biol.">
        <title>Initial characterization of the human central proteome.</title>
        <authorList>
            <person name="Burkard T.R."/>
            <person name="Planyavsky M."/>
            <person name="Kaupe I."/>
            <person name="Breitwieser F.P."/>
            <person name="Buerckstuemmer T."/>
            <person name="Bennett K.L."/>
            <person name="Superti-Furga G."/>
            <person name="Colinge J."/>
        </authorList>
    </citation>
    <scope>IDENTIFICATION BY MASS SPECTROMETRY [LARGE SCALE ANALYSIS]</scope>
</reference>
<reference key="13">
    <citation type="journal article" date="2014" name="J. Proteomics">
        <title>An enzyme assisted RP-RPLC approach for in-depth analysis of human liver phosphoproteome.</title>
        <authorList>
            <person name="Bian Y."/>
            <person name="Song C."/>
            <person name="Cheng K."/>
            <person name="Dong M."/>
            <person name="Wang F."/>
            <person name="Huang J."/>
            <person name="Sun D."/>
            <person name="Wang L."/>
            <person name="Ye M."/>
            <person name="Zou H."/>
        </authorList>
    </citation>
    <scope>IDENTIFICATION BY MASS SPECTROMETRY [LARGE SCALE ANALYSIS]</scope>
    <source>
        <tissue>Liver</tissue>
    </source>
</reference>
<reference key="14">
    <citation type="journal article" date="2014" name="Proc. Natl. Acad. Sci. U.S.A.">
        <title>Mapping of SUMO sites and analysis of SUMOylation changes induced by external stimuli.</title>
        <authorList>
            <person name="Impens F."/>
            <person name="Radoshevich L."/>
            <person name="Cossart P."/>
            <person name="Ribet D."/>
        </authorList>
    </citation>
    <scope>SUMOYLATION [LARGE SCALE ANALYSIS] AT LYS-115</scope>
    <scope>IDENTIFICATION BY MASS SPECTROMETRY [LARGE SCALE ANALYSIS]</scope>
</reference>
<reference key="15">
    <citation type="journal article" date="2015" name="Proteomics">
        <title>N-terminome analysis of the human mitochondrial proteome.</title>
        <authorList>
            <person name="Vaca Jacome A.S."/>
            <person name="Rabilloud T."/>
            <person name="Schaeffer-Reiss C."/>
            <person name="Rompais M."/>
            <person name="Ayoub D."/>
            <person name="Lane L."/>
            <person name="Bairoch A."/>
            <person name="Van Dorsselaer A."/>
            <person name="Carapito C."/>
        </authorList>
    </citation>
    <scope>IDENTIFICATION BY MASS SPECTROMETRY [LARGE SCALE ANALYSIS]</scope>
</reference>
<reference key="16">
    <citation type="journal article" date="2017" name="Nat. Struct. Mol. Biol.">
        <title>Site-specific mapping of the human SUMO proteome reveals co-modification with phosphorylation.</title>
        <authorList>
            <person name="Hendriks I.A."/>
            <person name="Lyon D."/>
            <person name="Young C."/>
            <person name="Jensen L.J."/>
            <person name="Vertegaal A.C."/>
            <person name="Nielsen M.L."/>
        </authorList>
    </citation>
    <scope>SUMOYLATION [LARGE SCALE ANALYSIS] AT LYS-115</scope>
    <scope>IDENTIFICATION BY MASS SPECTROMETRY [LARGE SCALE ANALYSIS]</scope>
</reference>
<reference key="17">
    <citation type="journal article" date="1994" name="Cell">
        <title>The crystal structure of human hypoxanthine-guanine phosphoribosyltransferase with bound GMP.</title>
        <authorList>
            <person name="Eads J.C."/>
            <person name="Scapin G."/>
            <person name="Xu Y."/>
            <person name="Grubmeyer C."/>
            <person name="Sacchettini J.C."/>
        </authorList>
    </citation>
    <scope>X-RAY CRYSTALLOGRAPHY (2.45 ANGSTROMS) IN COMPLEX WITH GMP</scope>
</reference>
<reference key="18">
    <citation type="journal article" date="1999" name="Nat. Struct. Biol.">
        <title>The 2.0 A structure of human hypoxanthine-guanine phosphoribosyltransferase in complex with a transition-state analog inhibitor.</title>
        <authorList>
            <person name="Shi W."/>
            <person name="Li C.M."/>
            <person name="Tyler P.C."/>
            <person name="Furneaux R.H."/>
            <person name="Grubmeyer C."/>
            <person name="Schramm V.L."/>
            <person name="Almo S.C."/>
        </authorList>
    </citation>
    <scope>X-RAY CRYSTALLOGRAPHY (2.0 ANGSTROMS) IN COMPLEX WITH A TRANSITION-STATE ANALOG</scope>
</reference>
<reference key="19">
    <citation type="journal article" date="1999" name="Protein Sci.">
        <title>Ternary complex structure of human HGPRTase, PRPP, Mg2+, and the inhibitor HPP reveals the involvement of the flexible loop in substrate binding.</title>
        <authorList>
            <person name="Balendiran G.K."/>
            <person name="Molina J.A."/>
            <person name="Xu Y."/>
            <person name="Torres-Martinez J."/>
            <person name="Stevens R."/>
            <person name="Focia P.J."/>
            <person name="Eakin A.E."/>
            <person name="Sacchettini J.C."/>
            <person name="Craig S.P. III"/>
        </authorList>
    </citation>
    <scope>X-RAY CRYSTALLOGRAPHY (2.7 ANGSTROMS) OF MUTANT ALA-69 IN COMPLEX WITH PHOSPHORIBOSYLPYROPHOSPHATE; MAGNESIUM IONS AND HYPOXANTHINE ANALOG HPP</scope>
    <scope>CATALYTIC ACTIVITY</scope>
    <scope>BIOPHYSICOCHEMICAL PROPERTIES</scope>
    <scope>MUTAGENESIS OF LYS-69</scope>
    <scope>IDENTIFICATION BY MASS SPECTROMETRY</scope>
</reference>
<reference key="20">
    <citation type="journal article" date="2005" name="J. Mol. Biol.">
        <title>The crystal structure of free human hypoxanthine-guanine phosphoribosyltransferase reveals extensive conformational plasticity throughout the catalytic cycle.</title>
        <authorList>
            <person name="Keough D.T."/>
            <person name="Brereton I.M."/>
            <person name="de Jersey J."/>
            <person name="Guddat L.W."/>
        </authorList>
    </citation>
    <scope>X-RAY CRYSTALLOGRAPHY (1.90 ANGSTROMS) OF APOPROTEIN</scope>
    <scope>SUBUNIT</scope>
</reference>
<reference key="21">
    <citation type="journal article" date="2009" name="J. Med. Chem.">
        <title>Inhibition of hypoxanthine-guanine phosphoribosyltransferase by acyclic nucleoside phosphonates: a new class of antimalarial therapeutics.</title>
        <authorList>
            <person name="Keough D.T."/>
            <person name="Hockova D."/>
            <person name="Holy A."/>
            <person name="Naesens L.M."/>
            <person name="Skinner-Adams T.S."/>
            <person name="Jersey J."/>
            <person name="Guddat L.W."/>
        </authorList>
    </citation>
    <scope>X-RAY CRYSTALLOGRAPHY (2.60 ANGSTROMS) IN COMPLEXES WITH ACYCLIC NUCLEOSIDE PHOSPHONATES</scope>
    <scope>CATALYTIC ACTIVITY</scope>
</reference>
<reference key="22">
    <citation type="journal article" date="1983" name="J. Biol. Chem.">
        <title>Human hypoxanthine-guanine phosphoribosyltransferase.</title>
        <authorList>
            <person name="Wilson J.M."/>
            <person name="Kobayashi R."/>
            <person name="Fox I.H."/>
            <person name="Kelley W.N."/>
        </authorList>
    </citation>
    <scope>VARIANT HRH TORONTO GLY-51</scope>
</reference>
<reference key="23">
    <citation type="journal article" date="1983" name="J. Clin. Invest.">
        <title>Molecular basis of hypoxanthine-guanine phosphoribosyltransferase deficiency in a patient with the Lesch-Nyhan syndrome.</title>
        <authorList>
            <person name="Wilson J.M."/>
            <person name="Kelley W.N."/>
        </authorList>
    </citation>
    <scope>VARIANT LNS KINSTON ASN-194</scope>
</reference>
<reference key="24">
    <citation type="journal article" date="1983" name="Proc. Natl. Acad. Sci. U.S.A.">
        <title>Human hypoxanthine (guanine) phosphoribosyltransferase: an amino acid substitution in a mutant form of the enzyme isolated from a patient with gout.</title>
        <authorList>
            <person name="Wilson J.M."/>
            <person name="Tarr G.E."/>
            <person name="Kelley W.N."/>
        </authorList>
    </citation>
    <scope>VARIANT HRH LONDON LEU-110</scope>
</reference>
<reference key="25">
    <citation type="journal article" date="1984" name="J. Biol. Chem.">
        <title>Human hypoxanthine-guanine phosphoribosyltransferase. Structural alteration in a dysfunctional enzyme variant (HPRTMunich) isolated from a patient with gout.</title>
        <authorList>
            <person name="Wilson J.M."/>
            <person name="Kelley W.N."/>
        </authorList>
    </citation>
    <scope>VARIANT HRH MUNICH ARG-104</scope>
</reference>
<reference key="26">
    <citation type="journal article" date="1988" name="Am. J. Hum. Genet.">
        <title>Resolution of a missense mutant in human genomic DNA by denaturing gradient gel electrophoresis and direct sequencing using in vitro DNA amplification: HPRT Munich.</title>
        <authorList>
            <person name="Cariello N.F."/>
            <person name="Scott J.K."/>
            <person name="Kat A.G."/>
            <person name="Thilly W.G."/>
            <person name="Keohavong P."/>
        </authorList>
    </citation>
    <scope>VARIANT HRH MUNICH ARG-104</scope>
</reference>
<reference key="27">
    <citation type="journal article" date="1988" name="Gene">
        <title>Genetic basis of hypoxanthine guanine phosphoribosyltransferase deficiency in a patient with the Lesch-Nyhan syndrome (HPRTFlint).</title>
        <authorList>
            <person name="Davidson B.L."/>
            <person name="Pashmforoush M."/>
            <person name="Kelly W.N."/>
            <person name="Palella T.D."/>
        </authorList>
    </citation>
    <scope>VARIANT LNS FLINT LEU-74</scope>
</reference>
<reference key="28">
    <citation type="journal article" date="1988" name="Gene">
        <title>Human hypoxanthine-guanine phosphoribosyltransferase: a single nucleotide substitution in cDNA clones isolated from a patient with Lesch-Nyhan syndrome (HPRTMidland).</title>
        <authorList>
            <person name="Davidson B.L."/>
            <person name="Palella T.D."/>
            <person name="Kelly W.N."/>
        </authorList>
    </citation>
    <scope>VARIANT LNS MIDLAND ASP-130</scope>
</reference>
<reference key="29">
    <citation type="journal article" date="1988" name="Hum. Genet.">
        <title>Identification of a single nucleotide change in a mutant gene for hypoxanthine-guanine phosphoribosyltransferase (HPRT Ann Arbor).</title>
        <authorList>
            <person name="Fujimori S."/>
            <person name="Hidaka Y."/>
            <person name="Davidson B.L."/>
            <person name="Palella T.D."/>
            <person name="Kelley W.N."/>
        </authorList>
    </citation>
    <scope>VARIANT HRH MET-132</scope>
</reference>
<reference key="30">
    <citation type="journal article" date="1988" name="J. Clin. Invest.">
        <title>Hypoxanthine-guanine phosphoribosyltransferase. Genetic evidence for identical mutations in two partially deficient subjects.</title>
        <authorList>
            <person name="Davidson B.L."/>
            <person name="Chin S.J."/>
            <person name="Wilson J.M."/>
            <person name="Kelley W.N."/>
            <person name="Palella T.D."/>
        </authorList>
    </citation>
    <scope>VARIANT HRH LONDON LEU-110</scope>
</reference>
<reference key="31">
    <citation type="journal article" date="1988" name="J. Inherit. Metab. Dis.">
        <title>Biochemical basis of hypoxanthine-guanine phosphoribosyltransferase deficiency in nine families.</title>
        <authorList>
            <person name="Keough D.T."/>
            <person name="Gordon R.B."/>
            <person name="Dejersey J."/>
            <person name="Emmerson B.T."/>
        </authorList>
    </citation>
    <scope>VARIANTS DIRRANBANDI AND YERONGA</scope>
</reference>
<reference key="32">
    <citation type="journal article" date="1989" name="Acta Paediatr. Jpn. Overseas Ed.">
        <title>Molecular analysis of hypoxanthine-guanine phosphoribosyltransferase mutations in five unrelated Japanese patients.</title>
        <authorList>
            <person name="Igarashi T."/>
            <person name="Minami M."/>
            <person name="Nishida Y."/>
        </authorList>
    </citation>
    <scope>VARIANTS LNS LEU-54 AND 179-VAL-GLY-180 DELINS GLY-ARG</scope>
</reference>
<reference key="33">
    <citation type="journal article" date="1989" name="J. Biol. Chem.">
        <title>Human hypoxanthine-guanine phosphoribosyltransferase deficiency. The molecular defect in a patient with gout (HPRTAshville).</title>
        <authorList>
            <person name="Davidson B.L."/>
            <person name="Pashmforoush M."/>
            <person name="Kelly W.N."/>
            <person name="Palella T.D."/>
        </authorList>
    </citation>
    <scope>VARIANT HRH ASHVILLE GLY-201</scope>
</reference>
<reference key="34">
    <citation type="journal article" date="1989" name="J. Clin. Invest.">
        <title>Identification of a single nucleotide change in the hypoxanthine-guanine phosphoribosyltransferase gene (HPRTYale) responsible for Lesch-Nyhan syndrome.</title>
        <authorList>
            <person name="Fujimori S."/>
            <person name="Davidson B.L."/>
            <person name="Kelley W.N."/>
            <person name="Palella T.D."/>
        </authorList>
    </citation>
    <scope>VARIANT LNS YALE ARG-71</scope>
</reference>
<reference key="35">
    <citation type="journal article" date="1989" name="J. Clin. Invest.">
        <title>Molecular basis of hypoxanthine-guanine phosphoribosyltransferase deficiency in ten subjects determined by direct sequencing of amplified transcripts.</title>
        <authorList>
            <person name="Davidson B.L."/>
            <person name="Tarle S.A."/>
            <person name="Palella T.D."/>
            <person name="Kelley W.N."/>
        </authorList>
    </citation>
    <scope>VARIANTS ARLINGEN; DETROIT; NEW BRITON AND NEW HAVEN</scope>
    <scope>VARIANT LNS PRO-41</scope>
    <scope>VARIANT HRH VAL-80</scope>
</reference>
<reference key="36">
    <citation type="journal article" date="1989" name="Proc. Natl. Acad. Sci. U.S.A.">
        <title>Identification of mutations leading to the Lesch-Nyhan syndrome by automated direct DNA sequencing of in vitro amplified cDNA.</title>
        <authorList>
            <person name="Gibbs R.A."/>
            <person name="Nguyen P.N."/>
            <person name="McBride L.J."/>
            <person name="Koepf S.M."/>
            <person name="Caskey C.T."/>
        </authorList>
    </citation>
    <scope>VARIANTS RKJ</scope>
</reference>
<reference key="37">
    <citation type="journal article" date="1990" name="Genomics">
        <title>Multiplex DNA deletion detection and exon sequencing of the hypoxanthine phosphoribosyltransferase gene in Lesch-Nyhan families.</title>
        <authorList>
            <person name="Gibbs R.A."/>
            <person name="Nguyen P.N."/>
            <person name="Edwards A."/>
            <person name="Civitello A.B."/>
            <person name="Caskey C.T."/>
        </authorList>
    </citation>
    <scope>VARIANTS LNS RJK LYS-45; LEU-74; ASP-130; SER-131; LYS-143; SER-161; TYR-177; ASN-194; VAL-199; ASP-204 AND TYR-206</scope>
</reference>
<reference key="38">
    <citation type="journal article" date="1990" name="Hum. Genet.">
        <title>Molecular analyses of a Lesch-Nyhan syndrome mutation (hprtMontreal) by use of T-lymphocyte cultures.</title>
        <authorList>
            <person name="Skopek T.R."/>
            <person name="Recio L."/>
            <person name="Simpson D."/>
            <person name="Dallaire L."/>
            <person name="Melancon S.B."/>
            <person name="Ogier H."/>
            <person name="O'Neill J.P."/>
            <person name="Falta M.T."/>
            <person name="Nicklas J.A."/>
            <person name="Albertini R.J."/>
        </authorList>
    </citation>
    <scope>VARIANT LNS MONTREAL THR-57</scope>
</reference>
<reference key="39">
    <citation type="journal article" date="1990" name="J. Inherit. Metab. Dis.">
        <title>Identification of a single nucleotide substitution in the coding sequence of in vitro amplified cDNA from a patient with partial HPRT deficiency (HPRTBRISBANE).</title>
        <authorList>
            <person name="Gordon R.B."/>
            <person name="Sculley D.G."/>
            <person name="Dawson P.A."/>
            <person name="Beacham I.R."/>
            <person name="Emmerson B.T."/>
        </authorList>
    </citation>
    <scope>VARIANT LNS BRISBANE ILE-168</scope>
</reference>
<reference key="40">
    <citation type="journal article" date="1991" name="Am. J. Hum. Genet.">
        <title>Identification of 17 independent mutations responsible for human hypoxanthine-guanine phosphoribosyltransferase (HPRT) deficiency.</title>
        <authorList>
            <person name="Davidson B.L."/>
            <person name="Tarle S.A."/>
            <person name="van Antwerp M."/>
            <person name="Gibbs D.A."/>
            <person name="Watts R.W.E."/>
            <person name="Kelley W.N."/>
            <person name="Palella T.D."/>
        </authorList>
    </citation>
    <scope>VARIANTS GRAVESEND; MASHAD; HEAPEY; BANBURY; RUNCORN; FARNHAM; MARLOW AND READING</scope>
    <scope>VARIANTS LNS THR-42; PRO-51; THR-132; ARG-162 AND LEU-176</scope>
    <scope>VARIANT HRH ASP-7</scope>
</reference>
<reference key="41">
    <citation type="journal article" date="1991" name="Genomics">
        <title>Determination of the mutations responsible for the Lesch-Nyhan syndrome in 17 subjects.</title>
        <authorList>
            <person name="Tarle S.A."/>
            <person name="Davidson B.L."/>
            <person name="Wu V.C."/>
            <person name="Zidar F.J."/>
            <person name="Seegmiller J.E."/>
            <person name="Kelley W.N."/>
            <person name="Palella T.D."/>
        </authorList>
    </citation>
    <scope>VARIANTS LNS TYR-28 DEL; VAL-50; GLU-70; LEU-74; THR-183 AND ARG-204</scope>
</reference>
<reference key="42">
    <citation type="journal article" date="1991" name="Hum. Genet.">
        <title>Hypoxanthine-guanine phosphoribosyltransferase deficiency: analysis of HPRT mutations by direct sequencing and allele-specific amplification.</title>
        <authorList>
            <person name="Sculley D.G."/>
            <person name="Dawson P.A."/>
            <person name="Beacham I.R."/>
            <person name="Emmerson B.T."/>
            <person name="Gordon R.B."/>
        </authorList>
    </citation>
    <scope>VARIANTS PERTH; SWAN; TOOWONG AND URANGAN</scope>
    <scope>VARIANTS HRH SER-16; ARG-58 AND VAL-78</scope>
</reference>
<reference key="43">
    <citation type="journal article" date="1991" name="Adv. Exp. Med. Biol.">
        <title>Identification of two independent Japanese mutant HPRT genes using the PCR technique.</title>
        <authorList>
            <person name="Yamada Y."/>
            <person name="Goto H."/>
            <person name="Ogasawara N."/>
        </authorList>
    </citation>
    <scope>VARIANT ALA-188</scope>
    <scope>NUCLEOTIDE SEQUENCE [GENOMIC DNA] OF 183-193</scope>
</reference>
<reference key="44">
    <citation type="journal article" date="1992" name="Hum. Genet.">
        <title>The point mutation of hypoxanthine-guanine phosphoribosyltransferase (HPRTEdinburgh) and detection by allele-specific polymerase chain reaction.</title>
        <authorList>
            <person name="Lightfoot T."/>
            <person name="Joshi R."/>
            <person name="Nuki G."/>
            <person name="Snyder F.F."/>
        </authorList>
    </citation>
    <scope>VARIANT EDINBURGH GLY-52</scope>
    <scope>NUCLEOTIDE SEQUENCE [GENOMIC DNA]</scope>
</reference>
<reference key="45">
    <citation type="journal article" date="1992" name="Hum. Genet.">
        <title>A review of the molecular basis of hypoxanthine-guanine phosphoribosyltransferase (HPRT) deficiency.</title>
        <authorList>
            <person name="Sculley D.G."/>
            <person name="Dawson P.A."/>
            <person name="Emmerson B.T."/>
            <person name="Gordon R.B."/>
        </authorList>
    </citation>
    <scope>VARIANT HRH GLY-135</scope>
</reference>
<reference key="46">
    <citation type="journal article" date="1994" name="Hum. Mol. Genet.">
        <title>Sequence, expression and characterization of HPRTMoose Jaw: a point mutation resulting in cooperativity and decreased substrate affinities.</title>
        <authorList>
            <person name="Lightfoot T."/>
            <person name="Lewkonia R.M."/>
            <person name="Snyder F.F."/>
        </authorList>
    </citation>
    <scope>VARIANT HRH MOOSE JAW GLU-194</scope>
    <scope>NUCLEOTIDE SEQUENCE</scope>
</reference>
<reference key="47">
    <citation type="journal article" date="1995" name="Hum. Mutat.">
        <title>Identification of a new missense mutation in exon 2 of the human hypoxanthine phosphoribosyltransferase gene (HPRTIsar): a further example of clinical heterogeneity in HPRT deficiencies.</title>
        <authorList>
            <person name="Burgemeister R."/>
            <person name="Roetzer E."/>
            <person name="Gutensohn W."/>
            <person name="Gehrke M."/>
            <person name="Schiel W."/>
        </authorList>
    </citation>
    <scope>VARIANT LNS ISAR PHE-42</scope>
</reference>
<reference key="48">
    <citation type="journal article" date="1997" name="Hum. Genet.">
        <title>An asymptomatic germline missense base substitution in the hypoxanthine phosphoribosyltransferase (HPRT) gene that reduces the amount of enzyme in humans.</title>
        <authorList>
            <person name="Fujimori S."/>
            <person name="Sakuma R."/>
            <person name="Yamaoka N."/>
            <person name="Hakoda M."/>
            <person name="Yamanaka H."/>
            <person name="Kamatani N."/>
        </authorList>
    </citation>
    <scope>VARIANT ARG-61</scope>
</reference>
<reference key="49">
    <citation type="journal article" date="1998" name="Hum. Mutat. Suppl.">
        <title>The molecular basis of hypoxanthine-guanine phosphoribosyltransferase deficiency in French families; report of two novel mutations.</title>
        <authorList>
            <person name="Liu G."/>
            <person name="Aral B."/>
            <person name="Zabot M.-T."/>
            <person name="Kamoun P."/>
            <person name="Ceballos-Picot I."/>
        </authorList>
    </citation>
    <scope>VARIANT LNS ROANNE VAL-177</scope>
</reference>
<reference key="50">
    <citation type="journal article" date="2004" name="Nucleosides Nucleotides Nucleic Acids">
        <title>Mutations in the hypoxanthine guanine phosphoribosyltransferase gene (HPRT1) in Asian HPRT deficient families.</title>
        <authorList>
            <person name="Yamada Y."/>
            <person name="Yamada K."/>
            <person name="Sonta S."/>
            <person name="Wakamatsu N."/>
            <person name="Ogasawara N."/>
        </authorList>
    </citation>
    <scope>VARIANTS LNS PRO-64; PRO-65; GLU-70; CYS-72; GLN-78; PRO-147; GLU-159 AND 107-ASN--SER-110 DEL</scope>
    <scope>VARIANTS HRH ALA-188; VAL-192 AND CYS-195</scope>
</reference>
<reference key="51">
    <citation type="journal article" date="2007" name="Mol. Genet. Metab.">
        <title>Molecular analysis of HPRT deficiencies: an update of the spectrum of Asian mutations with novel mutations.</title>
        <authorList>
            <person name="Yamada Y."/>
            <person name="Nomura N."/>
            <person name="Yamada K."/>
            <person name="Wakamatsu N."/>
        </authorList>
    </citation>
    <scope>VARIANTS LNS VAL-8 DEL; TYR-28 DEL; PRO-64; PRO-65; GLU-70; CYS-72; GLN-78; PRO-147; GLU-159; VAL-159 INS AND ALA-188</scope>
    <scope>VARIANTS HRH PRO-124; GLY-185; VAL-192 AND CYS-195</scope>
</reference>
<reference key="52">
    <citation type="journal article" date="2010" name="Nucleosides Nucleotides Nucleic Acids">
        <title>Molecular analysis of two enzyme genes, HPRT1 and PRPS1, causing X-linked inborn errors of purine metabolism.</title>
        <authorList>
            <person name="Yamada Y."/>
            <person name="Yamada K."/>
            <person name="Nomura N."/>
            <person name="Yamano A."/>
            <person name="Kimura R."/>
            <person name="Tomida S."/>
            <person name="Naiki M."/>
            <person name="Wakamatsu N."/>
        </authorList>
    </citation>
    <scope>VARIANTS LNS TYR-44 AND LEU-74</scope>
</reference>
<reference key="53">
    <citation type="journal article" date="2014" name="Nucleosides Nucleotides Nucleic Acids">
        <title>Hypoxanthine guanine phosphoribosyltransferase (HPRT) deficiencies: HPRT1 mutations in new Japanese families and PRPP concentration.</title>
        <authorList>
            <person name="Yamada Y."/>
            <person name="Nomura N."/>
            <person name="Yamada K."/>
            <person name="Kimura R."/>
            <person name="Fukushi D."/>
            <person name="Wakamatsu N."/>
            <person name="Matsuda Y."/>
            <person name="Yamauchi T."/>
            <person name="Ueda T."/>
            <person name="Hasegawa H."/>
            <person name="Nakamura M."/>
            <person name="Ichida K."/>
            <person name="Kaneko K."/>
            <person name="Fujimori S."/>
        </authorList>
    </citation>
    <scope>INVOLVEMENT IN LNS</scope>
    <scope>INVOLVEMENT IN HRH</scope>
    <scope>VARIANTS HRH VAL-20; PHE-23 AND ARG-60</scope>
    <scope>CHARACTERIZATION OF VARIANTS HRH VAL-20; PHE-23 AND ARG-60</scope>
</reference>
<dbReference type="EC" id="2.4.2.8" evidence="3 13"/>
<dbReference type="EMBL" id="M31642">
    <property type="protein sequence ID" value="AAA52690.1"/>
    <property type="molecule type" value="mRNA"/>
</dbReference>
<dbReference type="EMBL" id="M26434">
    <property type="protein sequence ID" value="AAA36012.1"/>
    <property type="molecule type" value="Genomic_DNA"/>
</dbReference>
<dbReference type="EMBL" id="AK313435">
    <property type="protein sequence ID" value="BAG36226.1"/>
    <property type="molecule type" value="mRNA"/>
</dbReference>
<dbReference type="EMBL" id="BT019350">
    <property type="protein sequence ID" value="AAV38157.1"/>
    <property type="molecule type" value="mRNA"/>
</dbReference>
<dbReference type="EMBL" id="AY780550">
    <property type="protein sequence ID" value="AAV31777.1"/>
    <property type="molecule type" value="Genomic_DNA"/>
</dbReference>
<dbReference type="EMBL" id="AC004383">
    <property type="status" value="NOT_ANNOTATED_CDS"/>
    <property type="molecule type" value="Genomic_DNA"/>
</dbReference>
<dbReference type="EMBL" id="CH471107">
    <property type="protein sequence ID" value="EAX11761.1"/>
    <property type="molecule type" value="Genomic_DNA"/>
</dbReference>
<dbReference type="EMBL" id="BC000578">
    <property type="protein sequence ID" value="AAH00578.1"/>
    <property type="molecule type" value="mRNA"/>
</dbReference>
<dbReference type="EMBL" id="M12452">
    <property type="protein sequence ID" value="AAA52691.1"/>
    <property type="molecule type" value="Genomic_DNA"/>
</dbReference>
<dbReference type="EMBL" id="S79313">
    <property type="protein sequence ID" value="AAB21289.1"/>
    <property type="molecule type" value="Genomic_DNA"/>
</dbReference>
<dbReference type="EMBL" id="L29383">
    <property type="protein sequence ID" value="AAB59391.1"/>
    <property type="molecule type" value="mRNA"/>
</dbReference>
<dbReference type="EMBL" id="L29382">
    <property type="protein sequence ID" value="AAB59392.1"/>
    <property type="molecule type" value="mRNA"/>
</dbReference>
<dbReference type="EMBL" id="S60300">
    <property type="protein sequence ID" value="AAC60591.2"/>
    <property type="molecule type" value="mRNA"/>
</dbReference>
<dbReference type="CCDS" id="CCDS14641.1"/>
<dbReference type="PIR" id="A32728">
    <property type="entry name" value="RTHUG"/>
</dbReference>
<dbReference type="RefSeq" id="NP_000185.1">
    <property type="nucleotide sequence ID" value="NM_000194.3"/>
</dbReference>
<dbReference type="PDB" id="1BZY">
    <property type="method" value="X-ray"/>
    <property type="resolution" value="2.00 A"/>
    <property type="chains" value="A/B/C/D=2-218"/>
</dbReference>
<dbReference type="PDB" id="1D6N">
    <property type="method" value="X-ray"/>
    <property type="resolution" value="2.70 A"/>
    <property type="chains" value="A/B=5-218"/>
</dbReference>
<dbReference type="PDB" id="1HMP">
    <property type="method" value="X-ray"/>
    <property type="resolution" value="2.50 A"/>
    <property type="chains" value="A/B=2-218"/>
</dbReference>
<dbReference type="PDB" id="1Z7G">
    <property type="method" value="X-ray"/>
    <property type="resolution" value="1.90 A"/>
    <property type="chains" value="A/B/C/D=2-218"/>
</dbReference>
<dbReference type="PDB" id="2VFA">
    <property type="method" value="X-ray"/>
    <property type="resolution" value="2.80 A"/>
    <property type="chains" value="A/B=49-160"/>
</dbReference>
<dbReference type="PDB" id="3GEP">
    <property type="method" value="X-ray"/>
    <property type="resolution" value="2.60 A"/>
    <property type="chains" value="A/B=2-218"/>
</dbReference>
<dbReference type="PDB" id="3GGC">
    <property type="method" value="X-ray"/>
    <property type="resolution" value="2.78 A"/>
    <property type="chains" value="A/B=2-218"/>
</dbReference>
<dbReference type="PDB" id="3GGJ">
    <property type="method" value="X-ray"/>
    <property type="resolution" value="2.60 A"/>
    <property type="chains" value="A/B=2-218"/>
</dbReference>
<dbReference type="PDB" id="4IJQ">
    <property type="method" value="X-ray"/>
    <property type="resolution" value="2.00 A"/>
    <property type="chains" value="A/B/C/D=2-218"/>
</dbReference>
<dbReference type="PDB" id="4KN6">
    <property type="method" value="X-ray"/>
    <property type="resolution" value="2.73 A"/>
    <property type="chains" value="A=3-218"/>
</dbReference>
<dbReference type="PDB" id="4RAB">
    <property type="method" value="X-ray"/>
    <property type="resolution" value="2.26 A"/>
    <property type="chains" value="A/B/C/D=2-218"/>
</dbReference>
<dbReference type="PDB" id="4RAC">
    <property type="method" value="X-ray"/>
    <property type="resolution" value="2.05 A"/>
    <property type="chains" value="A/B/C/D=2-218"/>
</dbReference>
<dbReference type="PDB" id="4RAD">
    <property type="method" value="X-ray"/>
    <property type="resolution" value="2.00 A"/>
    <property type="chains" value="A/B/C/D/E/F/G/H=2-218"/>
</dbReference>
<dbReference type="PDB" id="4RAN">
    <property type="method" value="X-ray"/>
    <property type="resolution" value="2.55 A"/>
    <property type="chains" value="A/B/C/D=2-218"/>
</dbReference>
<dbReference type="PDB" id="4RAO">
    <property type="method" value="X-ray"/>
    <property type="resolution" value="1.87 A"/>
    <property type="chains" value="A/B/C/D=2-218"/>
</dbReference>
<dbReference type="PDB" id="4RAQ">
    <property type="method" value="X-ray"/>
    <property type="resolution" value="2.53 A"/>
    <property type="chains" value="A/B/C/D=2-218"/>
</dbReference>
<dbReference type="PDB" id="5BRN">
    <property type="method" value="X-ray"/>
    <property type="resolution" value="2.30 A"/>
    <property type="chains" value="A/B/C/D=1-218"/>
</dbReference>
<dbReference type="PDB" id="5BSK">
    <property type="method" value="X-ray"/>
    <property type="resolution" value="2.61 A"/>
    <property type="chains" value="A/B/C/D=1-218"/>
</dbReference>
<dbReference type="PDB" id="5HIA">
    <property type="method" value="X-ray"/>
    <property type="resolution" value="1.77 A"/>
    <property type="chains" value="A/B/C/D=1-218"/>
</dbReference>
<dbReference type="PDB" id="5W8V">
    <property type="method" value="X-ray"/>
    <property type="resolution" value="2.35 A"/>
    <property type="chains" value="A/B/C/D=5-218"/>
</dbReference>
<dbReference type="PDB" id="6BNJ">
    <property type="method" value="X-ray"/>
    <property type="resolution" value="1.91 A"/>
    <property type="chains" value="A/B/C/D=1-218"/>
</dbReference>
<dbReference type="PDB" id="7SAN">
    <property type="method" value="X-ray"/>
    <property type="resolution" value="2.58 A"/>
    <property type="chains" value="A/B/C/D=2-218"/>
</dbReference>
<dbReference type="PDB" id="8TPY">
    <property type="method" value="X-ray"/>
    <property type="resolution" value="2.50 A"/>
    <property type="chains" value="A/B/C/D=1-218"/>
</dbReference>
<dbReference type="PDBsum" id="1BZY"/>
<dbReference type="PDBsum" id="1D6N"/>
<dbReference type="PDBsum" id="1HMP"/>
<dbReference type="PDBsum" id="1Z7G"/>
<dbReference type="PDBsum" id="2VFA"/>
<dbReference type="PDBsum" id="3GEP"/>
<dbReference type="PDBsum" id="3GGC"/>
<dbReference type="PDBsum" id="3GGJ"/>
<dbReference type="PDBsum" id="4IJQ"/>
<dbReference type="PDBsum" id="4KN6"/>
<dbReference type="PDBsum" id="4RAB"/>
<dbReference type="PDBsum" id="4RAC"/>
<dbReference type="PDBsum" id="4RAD"/>
<dbReference type="PDBsum" id="4RAN"/>
<dbReference type="PDBsum" id="4RAO"/>
<dbReference type="PDBsum" id="4RAQ"/>
<dbReference type="PDBsum" id="5BRN"/>
<dbReference type="PDBsum" id="5BSK"/>
<dbReference type="PDBsum" id="5HIA"/>
<dbReference type="PDBsum" id="5W8V"/>
<dbReference type="PDBsum" id="6BNJ"/>
<dbReference type="PDBsum" id="7SAN"/>
<dbReference type="PDBsum" id="8TPY"/>
<dbReference type="SMR" id="P00492"/>
<dbReference type="BioGRID" id="109488">
    <property type="interactions" value="130"/>
</dbReference>
<dbReference type="FunCoup" id="P00492">
    <property type="interactions" value="609"/>
</dbReference>
<dbReference type="IntAct" id="P00492">
    <property type="interactions" value="42"/>
</dbReference>
<dbReference type="MINT" id="P00492"/>
<dbReference type="STRING" id="9606.ENSP00000298556"/>
<dbReference type="BindingDB" id="P00492"/>
<dbReference type="ChEMBL" id="CHEMBL2360"/>
<dbReference type="DrugBank" id="DB03153">
    <property type="generic name" value="3H-pyrazolo[4,3-d]pyrimidin-7-ol"/>
</dbReference>
<dbReference type="DrugBank" id="DB02309">
    <property type="generic name" value="5-monophosphate-9-beta-D-ribofuranosyl xanthine"/>
</dbReference>
<dbReference type="DrugBank" id="DB01632">
    <property type="generic name" value="5-O-phosphono-alpha-D-ribofuranosyl diphosphate"/>
</dbReference>
<dbReference type="DrugBank" id="DB04356">
    <property type="generic name" value="9-Deazaguanine"/>
</dbReference>
<dbReference type="DrugBank" id="DB00993">
    <property type="generic name" value="Azathioprine"/>
</dbReference>
<dbReference type="DrugBank" id="DB01033">
    <property type="generic name" value="Mercaptopurine"/>
</dbReference>
<dbReference type="DrugBank" id="DB00352">
    <property type="generic name" value="Tioguanine"/>
</dbReference>
<dbReference type="DrugCentral" id="P00492"/>
<dbReference type="GlyGen" id="P00492">
    <property type="glycosylation" value="1 site, 1 O-linked glycan (1 site)"/>
</dbReference>
<dbReference type="iPTMnet" id="P00492"/>
<dbReference type="MetOSite" id="P00492"/>
<dbReference type="PhosphoSitePlus" id="P00492"/>
<dbReference type="SwissPalm" id="P00492"/>
<dbReference type="BioMuta" id="HPRT1"/>
<dbReference type="DMDM" id="123497"/>
<dbReference type="OGP" id="P00492"/>
<dbReference type="REPRODUCTION-2DPAGE" id="IPI00218493"/>
<dbReference type="CPTAC" id="CPTAC-216"/>
<dbReference type="jPOST" id="P00492"/>
<dbReference type="MassIVE" id="P00492"/>
<dbReference type="PaxDb" id="9606-ENSP00000298556"/>
<dbReference type="PeptideAtlas" id="P00492"/>
<dbReference type="ProteomicsDB" id="51257"/>
<dbReference type="Pumba" id="P00492"/>
<dbReference type="TopDownProteomics" id="P00492"/>
<dbReference type="Antibodypedia" id="1912">
    <property type="antibodies" value="621 antibodies from 37 providers"/>
</dbReference>
<dbReference type="DNASU" id="3251"/>
<dbReference type="Ensembl" id="ENST00000298556.8">
    <property type="protein sequence ID" value="ENSP00000298556.7"/>
    <property type="gene ID" value="ENSG00000165704.15"/>
</dbReference>
<dbReference type="GeneID" id="3251"/>
<dbReference type="KEGG" id="hsa:3251"/>
<dbReference type="MANE-Select" id="ENST00000298556.8">
    <property type="protein sequence ID" value="ENSP00000298556.7"/>
    <property type="RefSeq nucleotide sequence ID" value="NM_000194.3"/>
    <property type="RefSeq protein sequence ID" value="NP_000185.1"/>
</dbReference>
<dbReference type="UCSC" id="uc004exl.5">
    <property type="organism name" value="human"/>
</dbReference>
<dbReference type="AGR" id="HGNC:5157"/>
<dbReference type="CTD" id="3251"/>
<dbReference type="DisGeNET" id="3251"/>
<dbReference type="GeneCards" id="HPRT1"/>
<dbReference type="GeneReviews" id="HPRT1"/>
<dbReference type="HGNC" id="HGNC:5157">
    <property type="gene designation" value="HPRT1"/>
</dbReference>
<dbReference type="HPA" id="ENSG00000165704">
    <property type="expression patterns" value="Low tissue specificity"/>
</dbReference>
<dbReference type="MalaCards" id="HPRT1"/>
<dbReference type="MIM" id="300322">
    <property type="type" value="phenotype"/>
</dbReference>
<dbReference type="MIM" id="300323">
    <property type="type" value="phenotype"/>
</dbReference>
<dbReference type="MIM" id="308000">
    <property type="type" value="gene"/>
</dbReference>
<dbReference type="neXtProt" id="NX_P00492"/>
<dbReference type="OpenTargets" id="ENSG00000165704"/>
<dbReference type="Orphanet" id="79233">
    <property type="disease" value="Hypoxanthine guanine phosphoribosyltransferase partial deficiency"/>
</dbReference>
<dbReference type="Orphanet" id="510">
    <property type="disease" value="Lesch-Nyhan syndrome"/>
</dbReference>
<dbReference type="PharmGKB" id="PA29427"/>
<dbReference type="VEuPathDB" id="HostDB:ENSG00000165704"/>
<dbReference type="eggNOG" id="KOG3367">
    <property type="taxonomic scope" value="Eukaryota"/>
</dbReference>
<dbReference type="GeneTree" id="ENSGT00940000155028"/>
<dbReference type="HOGENOM" id="CLU_073615_3_0_1"/>
<dbReference type="InParanoid" id="P00492"/>
<dbReference type="OMA" id="MQWRVAP"/>
<dbReference type="OrthoDB" id="9449045at2759"/>
<dbReference type="PAN-GO" id="P00492">
    <property type="GO annotations" value="7 GO annotations based on evolutionary models"/>
</dbReference>
<dbReference type="PhylomeDB" id="P00492"/>
<dbReference type="TreeFam" id="TF313367"/>
<dbReference type="BioCyc" id="MetaCyc:HS09275-MONOMER"/>
<dbReference type="BRENDA" id="2.4.2.8">
    <property type="organism ID" value="2681"/>
</dbReference>
<dbReference type="PathwayCommons" id="P00492"/>
<dbReference type="Reactome" id="R-HSA-74217">
    <property type="pathway name" value="Purine salvage"/>
</dbReference>
<dbReference type="Reactome" id="R-HSA-9734281">
    <property type="pathway name" value="Defective HPRT1 disrupts guanine and hypoxanthine salvage"/>
</dbReference>
<dbReference type="Reactome" id="R-HSA-9748787">
    <property type="pathway name" value="Azathioprine ADME"/>
</dbReference>
<dbReference type="SABIO-RK" id="P00492"/>
<dbReference type="SignaLink" id="P00492"/>
<dbReference type="UniPathway" id="UPA00591">
    <property type="reaction ID" value="UER00648"/>
</dbReference>
<dbReference type="BioGRID-ORCS" id="3251">
    <property type="hits" value="20 hits in 790 CRISPR screens"/>
</dbReference>
<dbReference type="ChiTaRS" id="HPRT1">
    <property type="organism name" value="human"/>
</dbReference>
<dbReference type="EvolutionaryTrace" id="P00492"/>
<dbReference type="GeneWiki" id="Hypoxanthine-guanine_phosphoribosyltransferase"/>
<dbReference type="GenomeRNAi" id="3251"/>
<dbReference type="Pharos" id="P00492">
    <property type="development level" value="Tchem"/>
</dbReference>
<dbReference type="PRO" id="PR:P00492"/>
<dbReference type="Proteomes" id="UP000005640">
    <property type="component" value="Chromosome X"/>
</dbReference>
<dbReference type="RNAct" id="P00492">
    <property type="molecule type" value="protein"/>
</dbReference>
<dbReference type="Bgee" id="ENSG00000165704">
    <property type="expression patterns" value="Expressed in oocyte and 209 other cell types or tissues"/>
</dbReference>
<dbReference type="ExpressionAtlas" id="P00492">
    <property type="expression patterns" value="baseline and differential"/>
</dbReference>
<dbReference type="GO" id="GO:0005737">
    <property type="term" value="C:cytoplasm"/>
    <property type="evidence" value="ECO:0000314"/>
    <property type="project" value="UniProtKB"/>
</dbReference>
<dbReference type="GO" id="GO:0005829">
    <property type="term" value="C:cytosol"/>
    <property type="evidence" value="ECO:0000314"/>
    <property type="project" value="HPA"/>
</dbReference>
<dbReference type="GO" id="GO:0070062">
    <property type="term" value="C:extracellular exosome"/>
    <property type="evidence" value="ECO:0007005"/>
    <property type="project" value="UniProtKB"/>
</dbReference>
<dbReference type="GO" id="GO:0052657">
    <property type="term" value="F:guanine phosphoribosyltransferase activity"/>
    <property type="evidence" value="ECO:0000314"/>
    <property type="project" value="UniProtKB"/>
</dbReference>
<dbReference type="GO" id="GO:0004422">
    <property type="term" value="F:hypoxanthine phosphoribosyltransferase activity"/>
    <property type="evidence" value="ECO:0000314"/>
    <property type="project" value="UniProtKB"/>
</dbReference>
<dbReference type="GO" id="GO:0042802">
    <property type="term" value="F:identical protein binding"/>
    <property type="evidence" value="ECO:0000353"/>
    <property type="project" value="UniProtKB"/>
</dbReference>
<dbReference type="GO" id="GO:0000287">
    <property type="term" value="F:magnesium ion binding"/>
    <property type="evidence" value="ECO:0000314"/>
    <property type="project" value="UniProtKB"/>
</dbReference>
<dbReference type="GO" id="GO:0000166">
    <property type="term" value="F:nucleotide binding"/>
    <property type="evidence" value="ECO:0007669"/>
    <property type="project" value="UniProtKB-KW"/>
</dbReference>
<dbReference type="GO" id="GO:0046083">
    <property type="term" value="P:adenine metabolic process"/>
    <property type="evidence" value="ECO:0007669"/>
    <property type="project" value="Ensembl"/>
</dbReference>
<dbReference type="GO" id="GO:0044209">
    <property type="term" value="P:AMP salvage"/>
    <property type="evidence" value="ECO:0007669"/>
    <property type="project" value="Ensembl"/>
</dbReference>
<dbReference type="GO" id="GO:0021954">
    <property type="term" value="P:central nervous system neuron development"/>
    <property type="evidence" value="ECO:0007669"/>
    <property type="project" value="Ensembl"/>
</dbReference>
<dbReference type="GO" id="GO:0021895">
    <property type="term" value="P:cerebral cortex neuron differentiation"/>
    <property type="evidence" value="ECO:0007669"/>
    <property type="project" value="Ensembl"/>
</dbReference>
<dbReference type="GO" id="GO:0048813">
    <property type="term" value="P:dendrite morphogenesis"/>
    <property type="evidence" value="ECO:0007669"/>
    <property type="project" value="Ensembl"/>
</dbReference>
<dbReference type="GO" id="GO:0042417">
    <property type="term" value="P:dopamine metabolic process"/>
    <property type="evidence" value="ECO:0007669"/>
    <property type="project" value="Ensembl"/>
</dbReference>
<dbReference type="GO" id="GO:0071542">
    <property type="term" value="P:dopaminergic neuron differentiation"/>
    <property type="evidence" value="ECO:0007669"/>
    <property type="project" value="Ensembl"/>
</dbReference>
<dbReference type="GO" id="GO:0046038">
    <property type="term" value="P:GMP catabolic process"/>
    <property type="evidence" value="ECO:0000314"/>
    <property type="project" value="UniProtKB"/>
</dbReference>
<dbReference type="GO" id="GO:0032263">
    <property type="term" value="P:GMP salvage"/>
    <property type="evidence" value="ECO:0000314"/>
    <property type="project" value="MGI"/>
</dbReference>
<dbReference type="GO" id="GO:0007625">
    <property type="term" value="P:grooming behavior"/>
    <property type="evidence" value="ECO:0007669"/>
    <property type="project" value="Ensembl"/>
</dbReference>
<dbReference type="GO" id="GO:0006178">
    <property type="term" value="P:guanine salvage"/>
    <property type="evidence" value="ECO:0000314"/>
    <property type="project" value="UniProtKB"/>
</dbReference>
<dbReference type="GO" id="GO:0046100">
    <property type="term" value="P:hypoxanthine metabolic process"/>
    <property type="evidence" value="ECO:0000315"/>
    <property type="project" value="UniProtKB"/>
</dbReference>
<dbReference type="GO" id="GO:0043103">
    <property type="term" value="P:hypoxanthine salvage"/>
    <property type="evidence" value="ECO:0000314"/>
    <property type="project" value="UniProtKB"/>
</dbReference>
<dbReference type="GO" id="GO:0046040">
    <property type="term" value="P:IMP metabolic process"/>
    <property type="evidence" value="ECO:0000314"/>
    <property type="project" value="UniProtKB"/>
</dbReference>
<dbReference type="GO" id="GO:0032264">
    <property type="term" value="P:IMP salvage"/>
    <property type="evidence" value="ECO:0000318"/>
    <property type="project" value="GO_Central"/>
</dbReference>
<dbReference type="GO" id="GO:0007626">
    <property type="term" value="P:locomotory behavior"/>
    <property type="evidence" value="ECO:0007669"/>
    <property type="project" value="Ensembl"/>
</dbReference>
<dbReference type="GO" id="GO:0046651">
    <property type="term" value="P:lymphocyte proliferation"/>
    <property type="evidence" value="ECO:0007669"/>
    <property type="project" value="Ensembl"/>
</dbReference>
<dbReference type="GO" id="GO:0045964">
    <property type="term" value="P:positive regulation of dopamine metabolic process"/>
    <property type="evidence" value="ECO:0000315"/>
    <property type="project" value="UniProtKB"/>
</dbReference>
<dbReference type="GO" id="GO:0051289">
    <property type="term" value="P:protein homotetramerization"/>
    <property type="evidence" value="ECO:0000353"/>
    <property type="project" value="UniProtKB"/>
</dbReference>
<dbReference type="GO" id="GO:0006164">
    <property type="term" value="P:purine nucleotide biosynthetic process"/>
    <property type="evidence" value="ECO:0000315"/>
    <property type="project" value="UniProtKB"/>
</dbReference>
<dbReference type="GO" id="GO:0006166">
    <property type="term" value="P:purine ribonucleoside salvage"/>
    <property type="evidence" value="ECO:0000315"/>
    <property type="project" value="UniProtKB"/>
</dbReference>
<dbReference type="GO" id="GO:0001975">
    <property type="term" value="P:response to amphetamine"/>
    <property type="evidence" value="ECO:0007669"/>
    <property type="project" value="Ensembl"/>
</dbReference>
<dbReference type="GO" id="GO:0021756">
    <property type="term" value="P:striatum development"/>
    <property type="evidence" value="ECO:0007669"/>
    <property type="project" value="Ensembl"/>
</dbReference>
<dbReference type="GO" id="GO:0001913">
    <property type="term" value="P:T cell mediated cytotoxicity"/>
    <property type="evidence" value="ECO:0007669"/>
    <property type="project" value="Ensembl"/>
</dbReference>
<dbReference type="CDD" id="cd06223">
    <property type="entry name" value="PRTases_typeI"/>
    <property type="match status" value="1"/>
</dbReference>
<dbReference type="FunFam" id="3.40.50.2020:FF:000019">
    <property type="entry name" value="Hypoxanthine phosphoribosyltransferase"/>
    <property type="match status" value="1"/>
</dbReference>
<dbReference type="Gene3D" id="3.40.50.2020">
    <property type="match status" value="1"/>
</dbReference>
<dbReference type="InterPro" id="IPR050408">
    <property type="entry name" value="HGPRT"/>
</dbReference>
<dbReference type="InterPro" id="IPR005904">
    <property type="entry name" value="Hxn_phspho_trans"/>
</dbReference>
<dbReference type="InterPro" id="IPR000836">
    <property type="entry name" value="PRibTrfase_dom"/>
</dbReference>
<dbReference type="InterPro" id="IPR029057">
    <property type="entry name" value="PRTase-like"/>
</dbReference>
<dbReference type="NCBIfam" id="TIGR01203">
    <property type="entry name" value="HGPRTase"/>
    <property type="match status" value="1"/>
</dbReference>
<dbReference type="PANTHER" id="PTHR43340">
    <property type="entry name" value="HYPOXANTHINE-GUANINE PHOSPHORIBOSYLTRANSFERASE"/>
    <property type="match status" value="1"/>
</dbReference>
<dbReference type="PANTHER" id="PTHR43340:SF6">
    <property type="entry name" value="HYPOXANTHINE-GUANINE PHOSPHORIBOSYLTRANSFERASE"/>
    <property type="match status" value="1"/>
</dbReference>
<dbReference type="Pfam" id="PF00156">
    <property type="entry name" value="Pribosyltran"/>
    <property type="match status" value="1"/>
</dbReference>
<dbReference type="SUPFAM" id="SSF53271">
    <property type="entry name" value="PRTase-like"/>
    <property type="match status" value="1"/>
</dbReference>
<dbReference type="PROSITE" id="PS00103">
    <property type="entry name" value="PUR_PYR_PR_TRANSFER"/>
    <property type="match status" value="1"/>
</dbReference>